<name>ENPP2_MOUSE</name>
<proteinExistence type="evidence at protein level"/>
<feature type="signal peptide" evidence="2">
    <location>
        <begin position="1"/>
        <end position="27"/>
    </location>
</feature>
<feature type="propeptide" id="PRO_0000281650" description="Removed by furin" evidence="2">
    <location>
        <begin position="28"/>
        <end position="35"/>
    </location>
</feature>
<feature type="chain" id="PRO_0000188568" description="Autotaxin">
    <location>
        <begin position="36"/>
        <end position="862"/>
    </location>
</feature>
<feature type="domain" description="SMB 1" evidence="4">
    <location>
        <begin position="54"/>
        <end position="97"/>
    </location>
</feature>
<feature type="domain" description="SMB 2" evidence="4">
    <location>
        <begin position="98"/>
        <end position="142"/>
    </location>
</feature>
<feature type="region of interest" description="Phosphodiesterase domain" evidence="19">
    <location>
        <begin position="144"/>
        <end position="501"/>
    </location>
</feature>
<feature type="region of interest" description="Nuclease-like domain" evidence="19">
    <location>
        <begin position="597"/>
        <end position="862"/>
    </location>
</feature>
<feature type="region of interest" description="Required for secretion" evidence="8">
    <location>
        <begin position="829"/>
        <end position="850"/>
    </location>
</feature>
<feature type="short sequence motif" description="Cell attachment site" evidence="3">
    <location>
        <begin position="126"/>
        <end position="128"/>
    </location>
</feature>
<feature type="active site" description="Nucleophile" evidence="19">
    <location>
        <position position="209"/>
    </location>
</feature>
<feature type="binding site" evidence="9 10 21 22 23 24 25 26 27 28 29 30 35 36">
    <location>
        <position position="171"/>
    </location>
    <ligand>
        <name>Zn(2+)</name>
        <dbReference type="ChEBI" id="CHEBI:29105"/>
        <label>1</label>
        <note>catalytic</note>
    </ligand>
</feature>
<feature type="binding site" evidence="9 24">
    <location>
        <position position="209"/>
    </location>
    <ligand>
        <name>1-(9Z-octadecenoyl)-sn-glycero-3-phosphate</name>
        <dbReference type="ChEBI" id="CHEBI:74544"/>
    </ligand>
</feature>
<feature type="binding site" evidence="9 23">
    <location>
        <position position="209"/>
    </location>
    <ligand>
        <name>1-hexadecanoyl-sn-glycero-3-phosphate</name>
        <dbReference type="ChEBI" id="CHEBI:57518"/>
    </ligand>
</feature>
<feature type="binding site" evidence="9 22">
    <location>
        <position position="209"/>
    </location>
    <ligand>
        <name>1-tetradecanoyl-sn-glycerol 3-phosphate</name>
        <dbReference type="ChEBI" id="CHEBI:72683"/>
    </ligand>
</feature>
<feature type="binding site" evidence="9 10 21 22 23 24 25 26 27 28 29 30 35 36">
    <location>
        <position position="209"/>
    </location>
    <ligand>
        <name>Zn(2+)</name>
        <dbReference type="ChEBI" id="CHEBI:29105"/>
        <label>1</label>
        <note>catalytic</note>
    </ligand>
</feature>
<feature type="binding site" evidence="9 24">
    <location>
        <position position="230"/>
    </location>
    <ligand>
        <name>1-(9Z-octadecenoyl)-sn-glycero-3-phosphate</name>
        <dbReference type="ChEBI" id="CHEBI:74544"/>
    </ligand>
</feature>
<feature type="binding site" evidence="9 23">
    <location>
        <position position="230"/>
    </location>
    <ligand>
        <name>1-hexadecanoyl-sn-glycero-3-phosphate</name>
        <dbReference type="ChEBI" id="CHEBI:57518"/>
    </ligand>
</feature>
<feature type="binding site" evidence="9 22">
    <location>
        <position position="230"/>
    </location>
    <ligand>
        <name>1-tetradecanoyl-sn-glycerol 3-phosphate</name>
        <dbReference type="ChEBI" id="CHEBI:72683"/>
    </ligand>
</feature>
<feature type="binding site" evidence="9 24">
    <location>
        <position position="311"/>
    </location>
    <ligand>
        <name>1-(9Z-octadecenoyl)-sn-glycero-3-phosphate</name>
        <dbReference type="ChEBI" id="CHEBI:74544"/>
    </ligand>
</feature>
<feature type="binding site" evidence="9 23">
    <location>
        <position position="311"/>
    </location>
    <ligand>
        <name>1-hexadecanoyl-sn-glycero-3-phosphate</name>
        <dbReference type="ChEBI" id="CHEBI:57518"/>
    </ligand>
</feature>
<feature type="binding site" evidence="9 22">
    <location>
        <position position="311"/>
    </location>
    <ligand>
        <name>1-tetradecanoyl-sn-glycerol 3-phosphate</name>
        <dbReference type="ChEBI" id="CHEBI:72683"/>
    </ligand>
</feature>
<feature type="binding site" evidence="9 10 21 22 23 24 25 26 27 28 29 30 35 36 37">
    <location>
        <position position="311"/>
    </location>
    <ligand>
        <name>Zn(2+)</name>
        <dbReference type="ChEBI" id="CHEBI:29105"/>
        <label>2</label>
        <note>catalytic</note>
    </ligand>
</feature>
<feature type="binding site" evidence="9 10 21 22 23 24 25 26 27 28 29 30 35 36 37">
    <location>
        <position position="315"/>
    </location>
    <ligand>
        <name>Zn(2+)</name>
        <dbReference type="ChEBI" id="CHEBI:29105"/>
        <label>2</label>
        <note>catalytic</note>
    </ligand>
</feature>
<feature type="binding site" evidence="9 10 22 23 24 25 26 27 28 29 30 35 36">
    <location>
        <position position="358"/>
    </location>
    <ligand>
        <name>Zn(2+)</name>
        <dbReference type="ChEBI" id="CHEBI:29105"/>
        <label>1</label>
        <note>catalytic</note>
    </ligand>
</feature>
<feature type="binding site" evidence="9 10 21 22 23 24 25 26 27 28 29 30 35 36">
    <location>
        <position position="359"/>
    </location>
    <ligand>
        <name>Zn(2+)</name>
        <dbReference type="ChEBI" id="CHEBI:29105"/>
        <label>1</label>
        <note>catalytic</note>
    </ligand>
</feature>
<feature type="binding site" evidence="9 24">
    <location>
        <position position="474"/>
    </location>
    <ligand>
        <name>1-(9Z-octadecenoyl)-sn-glycero-3-phosphate</name>
        <dbReference type="ChEBI" id="CHEBI:74544"/>
    </ligand>
</feature>
<feature type="binding site" evidence="9 23">
    <location>
        <position position="474"/>
    </location>
    <ligand>
        <name>1-hexadecanoyl-sn-glycero-3-phosphate</name>
        <dbReference type="ChEBI" id="CHEBI:57518"/>
    </ligand>
</feature>
<feature type="binding site" evidence="9 22">
    <location>
        <position position="474"/>
    </location>
    <ligand>
        <name>1-tetradecanoyl-sn-glycerol 3-phosphate</name>
        <dbReference type="ChEBI" id="CHEBI:72683"/>
    </ligand>
</feature>
<feature type="binding site" evidence="9 10 21 22 23 24 25 26 27 28 29 30 35 36 37">
    <location>
        <position position="474"/>
    </location>
    <ligand>
        <name>Zn(2+)</name>
        <dbReference type="ChEBI" id="CHEBI:29105"/>
        <label>2</label>
        <note>catalytic</note>
    </ligand>
</feature>
<feature type="binding site" evidence="9 10 11 21 22 23 24 25 26 27 28 29 30 35 36 37">
    <location>
        <position position="739"/>
    </location>
    <ligand>
        <name>Ca(2+)</name>
        <dbReference type="ChEBI" id="CHEBI:29108"/>
    </ligand>
</feature>
<feature type="binding site" evidence="9 10 11 21 22 24 25 26 27 28 29 30 35 36 37">
    <location>
        <position position="741"/>
    </location>
    <ligand>
        <name>Ca(2+)</name>
        <dbReference type="ChEBI" id="CHEBI:29108"/>
    </ligand>
</feature>
<feature type="binding site" evidence="9 10 11 21 22 23 24 25 26 27 28 29 30 35 36 37">
    <location>
        <position position="743"/>
    </location>
    <ligand>
        <name>Ca(2+)</name>
        <dbReference type="ChEBI" id="CHEBI:29108"/>
    </ligand>
</feature>
<feature type="binding site" evidence="9 10 11 21 22 23 24 25 26 27 28 29 30 35 36 37">
    <location>
        <position position="745"/>
    </location>
    <ligand>
        <name>Ca(2+)</name>
        <dbReference type="ChEBI" id="CHEBI:29108"/>
    </ligand>
</feature>
<feature type="binding site" evidence="9 10 11 21 22 23 24 25 26 27 28 29 30 36 37">
    <location>
        <position position="747"/>
    </location>
    <ligand>
        <name>Ca(2+)</name>
        <dbReference type="ChEBI" id="CHEBI:29108"/>
    </ligand>
</feature>
<feature type="site" description="Essential for catalytic activity" evidence="8">
    <location>
        <position position="852"/>
    </location>
</feature>
<feature type="glycosylation site" description="N-linked (GlcNAc...) asparagine" evidence="9 10 21 22 23 24 25 26 27 28 29 30 36">
    <location>
        <position position="53"/>
    </location>
</feature>
<feature type="glycosylation site" description="N-linked (GlcNAc...) asparagine" evidence="9 10 11 21 22 23 24 25 26 27 28 29 30 35 36 37">
    <location>
        <position position="410"/>
    </location>
</feature>
<feature type="glycosylation site" description="N-linked (GlcNAc...) asparagine" evidence="9 10 11 21 22 23 24 25 26 27 28 29 30 35 36 37">
    <location>
        <position position="524"/>
    </location>
</feature>
<feature type="glycosylation site" description="N-linked (GlcNAc...) asparagine" evidence="3">
    <location>
        <position position="806"/>
    </location>
</feature>
<feature type="disulfide bond" evidence="9 10 11 13 21 22 23 24 25 26 27 28 29 30 35 36 37 38 39">
    <location>
        <begin position="58"/>
        <end position="75"/>
    </location>
</feature>
<feature type="disulfide bond" evidence="9 10 11 13 21 22 23 24 25 26 27 28 29 30 35 36 37 38 39">
    <location>
        <begin position="62"/>
        <end position="93"/>
    </location>
</feature>
<feature type="disulfide bond" evidence="9 10 11 13 21 22 23 24 25 26 27 28 29 30 35 36 37 38 39">
    <location>
        <begin position="73"/>
        <end position="86"/>
    </location>
</feature>
<feature type="disulfide bond" evidence="9 10 11 13 21 22 23 24 25 26 27 28 29 30 35 36 37 38 39">
    <location>
        <begin position="79"/>
        <end position="85"/>
    </location>
</feature>
<feature type="disulfide bond" evidence="9 10 11 13 21 22 23 24 25 26 27 28 29 30 35 36 37 38 39">
    <location>
        <begin position="102"/>
        <end position="119"/>
    </location>
</feature>
<feature type="disulfide bond" evidence="9 10 11 13 21 22 23 24 25 26 27 28 29 30 35 36 37 38 39">
    <location>
        <begin position="107"/>
        <end position="137"/>
    </location>
</feature>
<feature type="disulfide bond" evidence="9 10 11 13 21 22 23 24 25 26 27 28 29 30 35 36 37 38 39">
    <location>
        <begin position="117"/>
        <end position="130"/>
    </location>
</feature>
<feature type="disulfide bond" evidence="9 10 11 13 21 22 23 24 25 26 27 28 29 30 35 36 37 38 39">
    <location>
        <begin position="123"/>
        <end position="129"/>
    </location>
</feature>
<feature type="disulfide bond" evidence="9 10 11 13 21 22 23 24 25 26 27 28 29 30 35 36 37 38 39">
    <location>
        <begin position="148"/>
        <end position="194"/>
    </location>
</feature>
<feature type="disulfide bond" evidence="9 10 13 21 22 23 24 25 26 27 28 29 30 35 36 37 38 39">
    <location>
        <begin position="156"/>
        <end position="350"/>
    </location>
</feature>
<feature type="disulfide bond" evidence="9 10 13 21 22 23 24 25 26 27 28 29 30 35 36 38 39">
    <location>
        <begin position="366"/>
        <end position="468"/>
    </location>
</feature>
<feature type="disulfide bond" evidence="9 10 11 13 21 22 23 24 25 26 27 28 29 30 35 36 37 38 39">
    <location>
        <begin position="413"/>
        <end position="805"/>
    </location>
</feature>
<feature type="disulfide bond" evidence="9 10 11 13 21 22 23 24 25 26 27 28 29 30 35 36 37 38 39">
    <location>
        <begin position="566"/>
        <end position="666"/>
    </location>
</feature>
<feature type="disulfide bond" evidence="9 10 11 13 21 22 23 24 25 26 27 28 29 30 35 36 37 38 39">
    <location>
        <begin position="568"/>
        <end position="651"/>
    </location>
</feature>
<feature type="disulfide bond" evidence="9 10 11 13 21 22 23 24 25 26 27 28 29 30 35 36 37 38 39">
    <location>
        <begin position="774"/>
        <end position="784"/>
    </location>
</feature>
<feature type="splice variant" id="VSP_036396" description="In isoform 2." evidence="15">
    <original>E</original>
    <variation>EESSYGSPLTPAKRPKRKVAPKRRQERPVAPPKKRRRKLHRMDHYTAETRQDK</variation>
    <location>
        <position position="323"/>
    </location>
</feature>
<feature type="splice variant" id="VSP_036397" description="In isoform 3." evidence="15">
    <original>E</original>
    <variation>EAETGKFRGSKHENKKSLNGNVEPRK</variation>
    <location>
        <position position="592"/>
    </location>
</feature>
<feature type="mutagenesis site" description="Complete inhibition of secretion." evidence="6">
    <location>
        <begin position="12"/>
        <end position="27"/>
    </location>
</feature>
<feature type="mutagenesis site" description="Complete inhibition of secretion." evidence="6">
    <location>
        <begin position="12"/>
        <end position="22"/>
    </location>
</feature>
<feature type="mutagenesis site" description="No effect on secretion." evidence="6">
    <location>
        <begin position="23"/>
        <end position="27"/>
    </location>
</feature>
<feature type="mutagenesis site" description="No effect on secretion." evidence="6">
    <location>
        <position position="23"/>
    </location>
</feature>
<feature type="mutagenesis site" description="No effect on secretion." evidence="6">
    <location>
        <position position="25"/>
    </location>
</feature>
<feature type="mutagenesis site" description="No effect on secretion nor lysophospholipase activity." evidence="6">
    <location>
        <begin position="27"/>
        <end position="35"/>
    </location>
</feature>
<feature type="mutagenesis site" description="No effect on secretion." evidence="6">
    <location>
        <begin position="27"/>
        <end position="30"/>
    </location>
</feature>
<feature type="mutagenesis site" description="No effect on secretion." evidence="6">
    <location>
        <position position="27"/>
    </location>
</feature>
<feature type="mutagenesis site" description="No effect on secretion nor lysophospholipase activity." evidence="6">
    <location>
        <begin position="30"/>
        <end position="41"/>
    </location>
</feature>
<feature type="mutagenesis site" description="No effect on secretion nor lysophospholipase activity." evidence="6">
    <location>
        <begin position="30"/>
        <end position="33"/>
    </location>
</feature>
<feature type="mutagenesis site" description="No effect on secretion nor lysophospholipase activity." evidence="6">
    <location>
        <begin position="32"/>
        <end position="35"/>
    </location>
</feature>
<feature type="mutagenesis site" description="No effect on secretion nor lysophospholipase activity." evidence="6">
    <location>
        <begin position="36"/>
        <end position="40"/>
    </location>
</feature>
<feature type="mutagenesis site" description="No effect on secretion; slightly decreases lysophospholipase activity. Almost complete loss of lysophospholipase activity; when associated with N-410 del." evidence="6">
    <location>
        <position position="53"/>
    </location>
</feature>
<feature type="mutagenesis site" description="Reduced lysophospholipase activity." evidence="9">
    <original>F</original>
    <variation>A</variation>
    <location>
        <position position="210"/>
    </location>
</feature>
<feature type="mutagenesis site" description="Reduced lysophospholipase activity." evidence="9">
    <original>L</original>
    <variation>A</variation>
    <location>
        <position position="213"/>
    </location>
</feature>
<feature type="mutagenesis site" description="Reduced lysophospholipase activity." evidence="9">
    <original>N</original>
    <variation>A</variation>
    <location>
        <position position="230"/>
    </location>
</feature>
<feature type="mutagenesis site" description="Reduced lysophospholipase activity." evidence="9">
    <original>L</original>
    <variation>A</variation>
    <location>
        <position position="243"/>
    </location>
</feature>
<feature type="mutagenesis site" description="Reduced lysophospholipase activity." evidence="9">
    <original>E</original>
    <variation>A</variation>
    <location>
        <position position="247"/>
    </location>
</feature>
<feature type="mutagenesis site" description="Reduced lysophospholipase activity." evidence="9">
    <original>F</original>
    <variation>A</variation>
    <location>
        <position position="249"/>
    </location>
</feature>
<feature type="mutagenesis site" description="No effect on secretion; greatly inhibits lysoPLD activity. Inhibits secretion. Almost complete loss of lysoPLD activity; when associated with N-53 del." evidence="6">
    <location>
        <position position="410"/>
    </location>
</feature>
<feature type="mutagenesis site" description="Reduced lysophospholipase activity.">
    <original>M</original>
    <variation>A</variation>
    <location>
        <position position="512"/>
    </location>
</feature>
<feature type="mutagenesis site" description="No catalytic activity." evidence="8">
    <original>LKT</original>
    <variation>AAA</variation>
    <variation>RRR</variation>
    <variation>SSS</variation>
    <location>
        <begin position="851"/>
        <end position="853"/>
    </location>
</feature>
<feature type="mutagenesis site" description="No effect." evidence="8">
    <original>L</original>
    <variation>A</variation>
    <location>
        <position position="851"/>
    </location>
</feature>
<feature type="mutagenesis site" description="Strongly reduced catalytic activity." evidence="8">
    <original>K</original>
    <variation>A</variation>
    <variation>R</variation>
    <location>
        <position position="852"/>
    </location>
</feature>
<feature type="mutagenesis site" description="No effect." evidence="8">
    <original>T</original>
    <variation>A</variation>
    <location>
        <position position="853"/>
    </location>
</feature>
<feature type="sequence conflict" description="In Ref. 3; ACD12866." evidence="16" ref="3">
    <original>T</original>
    <variation>I</variation>
    <location>
        <position position="103"/>
    </location>
</feature>
<feature type="sequence conflict" description="In Ref. 1; AAD46480." evidence="16" ref="1">
    <original>G</original>
    <variation>S</variation>
    <location>
        <position position="517"/>
    </location>
</feature>
<feature type="sequence conflict" description="In Ref. 1; AAD46480." evidence="16" ref="1">
    <original>P</original>
    <variation>T</variation>
    <location>
        <position position="550"/>
    </location>
</feature>
<feature type="sequence conflict" description="In Ref. 1; AAD46480." evidence="16" ref="1">
    <original>E</original>
    <variation>K</variation>
    <location>
        <position position="573"/>
    </location>
</feature>
<feature type="sequence conflict" description="In Ref. 3; ACD12866 and 6; AAH03264." evidence="16" ref="3 6">
    <original>N</original>
    <variation>D</variation>
    <location>
        <position position="743"/>
    </location>
</feature>
<feature type="helix" evidence="46">
    <location>
        <begin position="53"/>
        <end position="55"/>
    </location>
</feature>
<feature type="turn" evidence="45">
    <location>
        <begin position="59"/>
        <end position="63"/>
    </location>
</feature>
<feature type="helix" evidence="45">
    <location>
        <begin position="77"/>
        <end position="79"/>
    </location>
</feature>
<feature type="turn" evidence="45">
    <location>
        <begin position="80"/>
        <end position="83"/>
    </location>
</feature>
<feature type="helix" evidence="45">
    <location>
        <begin position="89"/>
        <end position="93"/>
    </location>
</feature>
<feature type="turn" evidence="43">
    <location>
        <begin position="98"/>
        <end position="100"/>
    </location>
</feature>
<feature type="helix" evidence="45">
    <location>
        <begin position="104"/>
        <end position="106"/>
    </location>
</feature>
<feature type="strand" evidence="45">
    <location>
        <begin position="115"/>
        <end position="118"/>
    </location>
</feature>
<feature type="helix" evidence="45">
    <location>
        <begin position="123"/>
        <end position="126"/>
    </location>
</feature>
<feature type="helix" evidence="45">
    <location>
        <begin position="133"/>
        <end position="138"/>
    </location>
</feature>
<feature type="helix" evidence="45">
    <location>
        <begin position="143"/>
        <end position="145"/>
    </location>
</feature>
<feature type="strand" evidence="45">
    <location>
        <begin position="165"/>
        <end position="171"/>
    </location>
</feature>
<feature type="helix" evidence="45">
    <location>
        <begin position="175"/>
        <end position="183"/>
    </location>
</feature>
<feature type="helix" evidence="45">
    <location>
        <begin position="186"/>
        <end position="194"/>
    </location>
</feature>
<feature type="strand" evidence="45">
    <location>
        <begin position="195"/>
        <end position="197"/>
    </location>
</feature>
<feature type="helix" evidence="45">
    <location>
        <begin position="209"/>
        <end position="218"/>
    </location>
</feature>
<feature type="helix" evidence="45">
    <location>
        <begin position="222"/>
        <end position="225"/>
    </location>
</feature>
<feature type="strand" evidence="45">
    <location>
        <begin position="229"/>
        <end position="234"/>
    </location>
</feature>
<feature type="turn" evidence="45">
    <location>
        <begin position="235"/>
        <end position="238"/>
    </location>
</feature>
<feature type="strand" evidence="45">
    <location>
        <begin position="239"/>
        <end position="241"/>
    </location>
</feature>
<feature type="strand" evidence="40">
    <location>
        <begin position="243"/>
        <end position="246"/>
    </location>
</feature>
<feature type="helix" evidence="45">
    <location>
        <begin position="247"/>
        <end position="249"/>
    </location>
</feature>
<feature type="helix" evidence="45">
    <location>
        <begin position="251"/>
        <end position="253"/>
    </location>
</feature>
<feature type="helix" evidence="45">
    <location>
        <begin position="259"/>
        <end position="265"/>
    </location>
</feature>
<feature type="helix" evidence="45">
    <location>
        <begin position="281"/>
        <end position="292"/>
    </location>
</feature>
<feature type="turn" evidence="45">
    <location>
        <begin position="296"/>
        <end position="298"/>
    </location>
</feature>
<feature type="strand" evidence="45">
    <location>
        <begin position="301"/>
        <end position="310"/>
    </location>
</feature>
<feature type="helix" evidence="45">
    <location>
        <begin position="311"/>
        <end position="317"/>
    </location>
</feature>
<feature type="helix" evidence="45">
    <location>
        <begin position="322"/>
        <end position="324"/>
    </location>
</feature>
<feature type="helix" evidence="45">
    <location>
        <begin position="325"/>
        <end position="344"/>
    </location>
</feature>
<feature type="turn" evidence="45">
    <location>
        <begin position="348"/>
        <end position="350"/>
    </location>
</feature>
<feature type="strand" evidence="45">
    <location>
        <begin position="352"/>
        <end position="358"/>
    </location>
</feature>
<feature type="strand" evidence="45">
    <location>
        <begin position="368"/>
        <end position="371"/>
    </location>
</feature>
<feature type="helix" evidence="45">
    <location>
        <begin position="372"/>
        <end position="374"/>
    </location>
</feature>
<feature type="helix" evidence="40">
    <location>
        <begin position="379"/>
        <end position="381"/>
    </location>
</feature>
<feature type="strand" evidence="45">
    <location>
        <begin position="382"/>
        <end position="385"/>
    </location>
</feature>
<feature type="strand" evidence="45">
    <location>
        <begin position="387"/>
        <end position="396"/>
    </location>
</feature>
<feature type="helix" evidence="45">
    <location>
        <begin position="404"/>
        <end position="411"/>
    </location>
</feature>
<feature type="strand" evidence="45">
    <location>
        <begin position="419"/>
        <end position="424"/>
    </location>
</feature>
<feature type="helix" evidence="45">
    <location>
        <begin position="425"/>
        <end position="427"/>
    </location>
</feature>
<feature type="helix" evidence="45">
    <location>
        <begin position="430"/>
        <end position="432"/>
    </location>
</feature>
<feature type="strand" evidence="45">
    <location>
        <begin position="442"/>
        <end position="447"/>
    </location>
</feature>
<feature type="strand" evidence="45">
    <location>
        <begin position="452"/>
        <end position="456"/>
    </location>
</feature>
<feature type="helix" evidence="41">
    <location>
        <begin position="457"/>
        <end position="459"/>
    </location>
</feature>
<feature type="strand" evidence="42">
    <location>
        <begin position="471"/>
        <end position="473"/>
    </location>
</feature>
<feature type="helix" evidence="45">
    <location>
        <begin position="481"/>
        <end position="483"/>
    </location>
</feature>
<feature type="strand" evidence="45">
    <location>
        <begin position="487"/>
        <end position="494"/>
    </location>
</feature>
<feature type="strand" evidence="45">
    <location>
        <begin position="496"/>
        <end position="499"/>
    </location>
</feature>
<feature type="helix" evidence="45">
    <location>
        <begin position="505"/>
        <end position="507"/>
    </location>
</feature>
<feature type="helix" evidence="45">
    <location>
        <begin position="508"/>
        <end position="515"/>
    </location>
</feature>
<feature type="turn" evidence="45">
    <location>
        <begin position="527"/>
        <end position="530"/>
    </location>
</feature>
<feature type="helix" evidence="45">
    <location>
        <begin position="531"/>
        <end position="533"/>
    </location>
</feature>
<feature type="strand" evidence="45">
    <location>
        <begin position="534"/>
        <end position="536"/>
    </location>
</feature>
<feature type="helix" evidence="45">
    <location>
        <begin position="559"/>
        <end position="561"/>
    </location>
</feature>
<feature type="helix" evidence="44">
    <location>
        <begin position="579"/>
        <end position="581"/>
    </location>
</feature>
<feature type="turn" evidence="41">
    <location>
        <begin position="583"/>
        <end position="586"/>
    </location>
</feature>
<feature type="turn" evidence="45">
    <location>
        <begin position="593"/>
        <end position="595"/>
    </location>
</feature>
<feature type="strand" evidence="45">
    <location>
        <begin position="609"/>
        <end position="613"/>
    </location>
</feature>
<feature type="strand" evidence="45">
    <location>
        <begin position="618"/>
        <end position="622"/>
    </location>
</feature>
<feature type="turn" evidence="45">
    <location>
        <begin position="623"/>
        <end position="626"/>
    </location>
</feature>
<feature type="strand" evidence="45">
    <location>
        <begin position="627"/>
        <end position="635"/>
    </location>
</feature>
<feature type="helix" evidence="45">
    <location>
        <begin position="646"/>
        <end position="648"/>
    </location>
</feature>
<feature type="helix" evidence="45">
    <location>
        <begin position="660"/>
        <end position="662"/>
    </location>
</feature>
<feature type="helix" evidence="45">
    <location>
        <begin position="666"/>
        <end position="671"/>
    </location>
</feature>
<feature type="strand" evidence="45">
    <location>
        <begin position="676"/>
        <end position="681"/>
    </location>
</feature>
<feature type="helix" evidence="45">
    <location>
        <begin position="683"/>
        <end position="685"/>
    </location>
</feature>
<feature type="helix" evidence="45">
    <location>
        <begin position="689"/>
        <end position="695"/>
    </location>
</feature>
<feature type="helix" evidence="45">
    <location>
        <begin position="698"/>
        <end position="700"/>
    </location>
</feature>
<feature type="strand" evidence="45">
    <location>
        <begin position="701"/>
        <end position="704"/>
    </location>
</feature>
<feature type="helix" evidence="45">
    <location>
        <begin position="706"/>
        <end position="717"/>
    </location>
</feature>
<feature type="helix" evidence="45">
    <location>
        <begin position="719"/>
        <end position="727"/>
    </location>
</feature>
<feature type="strand" evidence="45">
    <location>
        <begin position="729"/>
        <end position="737"/>
    </location>
</feature>
<feature type="strand" evidence="45">
    <location>
        <begin position="743"/>
        <end position="745"/>
    </location>
</feature>
<feature type="helix" evidence="45">
    <location>
        <begin position="749"/>
        <end position="751"/>
    </location>
</feature>
<feature type="strand" evidence="45">
    <location>
        <begin position="765"/>
        <end position="776"/>
    </location>
</feature>
<feature type="helix" evidence="45">
    <location>
        <begin position="781"/>
        <end position="783"/>
    </location>
</feature>
<feature type="strand" evidence="45">
    <location>
        <begin position="788"/>
        <end position="796"/>
    </location>
</feature>
<feature type="turn" evidence="45">
    <location>
        <begin position="805"/>
        <end position="808"/>
    </location>
</feature>
<feature type="helix" evidence="45">
    <location>
        <begin position="811"/>
        <end position="813"/>
    </location>
</feature>
<feature type="helix" evidence="45">
    <location>
        <begin position="815"/>
        <end position="821"/>
    </location>
</feature>
<feature type="helix" evidence="45">
    <location>
        <begin position="826"/>
        <end position="833"/>
    </location>
</feature>
<feature type="strand" evidence="45">
    <location>
        <begin position="834"/>
        <end position="836"/>
    </location>
</feature>
<feature type="helix" evidence="45">
    <location>
        <begin position="845"/>
        <end position="853"/>
    </location>
</feature>
<reference key="1">
    <citation type="journal article" date="1999" name="Cytogenet. Cell Genet.">
        <title>Assignment of Pdnp2, the gene encoding phosphodiesterase I/nucleotide pyrophosphatase 2, to mouse chromosome 15D2.</title>
        <authorList>
            <person name="Piao J.-H."/>
            <person name="Matsuda Y."/>
            <person name="Nakamura H."/>
            <person name="Sano K."/>
        </authorList>
    </citation>
    <scope>NUCLEOTIDE SEQUENCE [MRNA] (ISOFORM 1)</scope>
    <source>
        <strain>C57BL/6J</strain>
    </source>
</reference>
<reference key="2">
    <citation type="journal article" date="2008" name="J. Biol. Chem.">
        <title>Murine and human autotaxin alpha, beta, and gamma isoforms: gene organization, tissue distribution, and biochemical characterization.</title>
        <authorList>
            <person name="Giganti A."/>
            <person name="Rodriguez M."/>
            <person name="Fould B."/>
            <person name="Moulharat N."/>
            <person name="Coge F."/>
            <person name="Chomarat P."/>
            <person name="Galizzi J.-P."/>
            <person name="Valet P."/>
            <person name="Saulnier-Blache J.-S."/>
            <person name="Boutin J.A."/>
            <person name="Ferry G."/>
        </authorList>
    </citation>
    <scope>NUCLEOTIDE SEQUENCE [MRNA] (ISOFORMS 1; 2 AND 3)</scope>
    <scope>CATALYTIC ACTIVITY</scope>
    <scope>FUNCTION</scope>
    <scope>ACTIVITY REGULATION</scope>
    <scope>BIOPHYSICOCHEMICAL PROPERTIES</scope>
    <scope>TISSUE SPECIFICITY</scope>
    <source>
        <tissue>Adipocyte</tissue>
        <tissue>Skeletal muscle</tissue>
    </source>
</reference>
<reference key="3">
    <citation type="submission" date="2008-04" db="EMBL/GenBank/DDBJ databases">
        <title>Comparative genomics, experimental biology, and bioinformatics merge to narrow a QTL for HDL cholesterol on mouse chromosome 15 and human chromosome 8.</title>
        <authorList>
            <person name="Burgess-Herbert S.L."/>
            <person name="Shockley K."/>
            <person name="Sheehan S."/>
            <person name="Bickerstaff L."/>
            <person name="Harwood B.I.V."/>
            <person name="Shen Y."/>
            <person name="Li R."/>
            <person name="Churchill G.A."/>
            <person name="Paigen B."/>
        </authorList>
    </citation>
    <scope>NUCLEOTIDE SEQUENCE [GENOMIC DNA]</scope>
    <source>
        <strain>MRL/MpJ</strain>
    </source>
</reference>
<reference key="4">
    <citation type="journal article" date="2005" name="Science">
        <title>The transcriptional landscape of the mammalian genome.</title>
        <authorList>
            <person name="Carninci P."/>
            <person name="Kasukawa T."/>
            <person name="Katayama S."/>
            <person name="Gough J."/>
            <person name="Frith M.C."/>
            <person name="Maeda N."/>
            <person name="Oyama R."/>
            <person name="Ravasi T."/>
            <person name="Lenhard B."/>
            <person name="Wells C."/>
            <person name="Kodzius R."/>
            <person name="Shimokawa K."/>
            <person name="Bajic V.B."/>
            <person name="Brenner S.E."/>
            <person name="Batalov S."/>
            <person name="Forrest A.R."/>
            <person name="Zavolan M."/>
            <person name="Davis M.J."/>
            <person name="Wilming L.G."/>
            <person name="Aidinis V."/>
            <person name="Allen J.E."/>
            <person name="Ambesi-Impiombato A."/>
            <person name="Apweiler R."/>
            <person name="Aturaliya R.N."/>
            <person name="Bailey T.L."/>
            <person name="Bansal M."/>
            <person name="Baxter L."/>
            <person name="Beisel K.W."/>
            <person name="Bersano T."/>
            <person name="Bono H."/>
            <person name="Chalk A.M."/>
            <person name="Chiu K.P."/>
            <person name="Choudhary V."/>
            <person name="Christoffels A."/>
            <person name="Clutterbuck D.R."/>
            <person name="Crowe M.L."/>
            <person name="Dalla E."/>
            <person name="Dalrymple B.P."/>
            <person name="de Bono B."/>
            <person name="Della Gatta G."/>
            <person name="di Bernardo D."/>
            <person name="Down T."/>
            <person name="Engstrom P."/>
            <person name="Fagiolini M."/>
            <person name="Faulkner G."/>
            <person name="Fletcher C.F."/>
            <person name="Fukushima T."/>
            <person name="Furuno M."/>
            <person name="Futaki S."/>
            <person name="Gariboldi M."/>
            <person name="Georgii-Hemming P."/>
            <person name="Gingeras T.R."/>
            <person name="Gojobori T."/>
            <person name="Green R.E."/>
            <person name="Gustincich S."/>
            <person name="Harbers M."/>
            <person name="Hayashi Y."/>
            <person name="Hensch T.K."/>
            <person name="Hirokawa N."/>
            <person name="Hill D."/>
            <person name="Huminiecki L."/>
            <person name="Iacono M."/>
            <person name="Ikeo K."/>
            <person name="Iwama A."/>
            <person name="Ishikawa T."/>
            <person name="Jakt M."/>
            <person name="Kanapin A."/>
            <person name="Katoh M."/>
            <person name="Kawasawa Y."/>
            <person name="Kelso J."/>
            <person name="Kitamura H."/>
            <person name="Kitano H."/>
            <person name="Kollias G."/>
            <person name="Krishnan S.P."/>
            <person name="Kruger A."/>
            <person name="Kummerfeld S.K."/>
            <person name="Kurochkin I.V."/>
            <person name="Lareau L.F."/>
            <person name="Lazarevic D."/>
            <person name="Lipovich L."/>
            <person name="Liu J."/>
            <person name="Liuni S."/>
            <person name="McWilliam S."/>
            <person name="Madan Babu M."/>
            <person name="Madera M."/>
            <person name="Marchionni L."/>
            <person name="Matsuda H."/>
            <person name="Matsuzawa S."/>
            <person name="Miki H."/>
            <person name="Mignone F."/>
            <person name="Miyake S."/>
            <person name="Morris K."/>
            <person name="Mottagui-Tabar S."/>
            <person name="Mulder N."/>
            <person name="Nakano N."/>
            <person name="Nakauchi H."/>
            <person name="Ng P."/>
            <person name="Nilsson R."/>
            <person name="Nishiguchi S."/>
            <person name="Nishikawa S."/>
            <person name="Nori F."/>
            <person name="Ohara O."/>
            <person name="Okazaki Y."/>
            <person name="Orlando V."/>
            <person name="Pang K.C."/>
            <person name="Pavan W.J."/>
            <person name="Pavesi G."/>
            <person name="Pesole G."/>
            <person name="Petrovsky N."/>
            <person name="Piazza S."/>
            <person name="Reed J."/>
            <person name="Reid J.F."/>
            <person name="Ring B.Z."/>
            <person name="Ringwald M."/>
            <person name="Rost B."/>
            <person name="Ruan Y."/>
            <person name="Salzberg S.L."/>
            <person name="Sandelin A."/>
            <person name="Schneider C."/>
            <person name="Schoenbach C."/>
            <person name="Sekiguchi K."/>
            <person name="Semple C.A."/>
            <person name="Seno S."/>
            <person name="Sessa L."/>
            <person name="Sheng Y."/>
            <person name="Shibata Y."/>
            <person name="Shimada H."/>
            <person name="Shimada K."/>
            <person name="Silva D."/>
            <person name="Sinclair B."/>
            <person name="Sperling S."/>
            <person name="Stupka E."/>
            <person name="Sugiura K."/>
            <person name="Sultana R."/>
            <person name="Takenaka Y."/>
            <person name="Taki K."/>
            <person name="Tammoja K."/>
            <person name="Tan S.L."/>
            <person name="Tang S."/>
            <person name="Taylor M.S."/>
            <person name="Tegner J."/>
            <person name="Teichmann S.A."/>
            <person name="Ueda H.R."/>
            <person name="van Nimwegen E."/>
            <person name="Verardo R."/>
            <person name="Wei C.L."/>
            <person name="Yagi K."/>
            <person name="Yamanishi H."/>
            <person name="Zabarovsky E."/>
            <person name="Zhu S."/>
            <person name="Zimmer A."/>
            <person name="Hide W."/>
            <person name="Bult C."/>
            <person name="Grimmond S.M."/>
            <person name="Teasdale R.D."/>
            <person name="Liu E.T."/>
            <person name="Brusic V."/>
            <person name="Quackenbush J."/>
            <person name="Wahlestedt C."/>
            <person name="Mattick J.S."/>
            <person name="Hume D.A."/>
            <person name="Kai C."/>
            <person name="Sasaki D."/>
            <person name="Tomaru Y."/>
            <person name="Fukuda S."/>
            <person name="Kanamori-Katayama M."/>
            <person name="Suzuki M."/>
            <person name="Aoki J."/>
            <person name="Arakawa T."/>
            <person name="Iida J."/>
            <person name="Imamura K."/>
            <person name="Itoh M."/>
            <person name="Kato T."/>
            <person name="Kawaji H."/>
            <person name="Kawagashira N."/>
            <person name="Kawashima T."/>
            <person name="Kojima M."/>
            <person name="Kondo S."/>
            <person name="Konno H."/>
            <person name="Nakano K."/>
            <person name="Ninomiya N."/>
            <person name="Nishio T."/>
            <person name="Okada M."/>
            <person name="Plessy C."/>
            <person name="Shibata K."/>
            <person name="Shiraki T."/>
            <person name="Suzuki S."/>
            <person name="Tagami M."/>
            <person name="Waki K."/>
            <person name="Watahiki A."/>
            <person name="Okamura-Oho Y."/>
            <person name="Suzuki H."/>
            <person name="Kawai J."/>
            <person name="Hayashizaki Y."/>
        </authorList>
    </citation>
    <scope>NUCLEOTIDE SEQUENCE [LARGE SCALE MRNA] (ISOFORM 1)</scope>
    <source>
        <strain>C57BL/6J</strain>
        <tissue>Skin</tissue>
    </source>
</reference>
<reference key="5">
    <citation type="submission" date="2005-07" db="EMBL/GenBank/DDBJ databases">
        <authorList>
            <person name="Mural R.J."/>
            <person name="Adams M.D."/>
            <person name="Myers E.W."/>
            <person name="Smith H.O."/>
            <person name="Venter J.C."/>
        </authorList>
    </citation>
    <scope>NUCLEOTIDE SEQUENCE [LARGE SCALE GENOMIC DNA]</scope>
</reference>
<reference key="6">
    <citation type="journal article" date="2004" name="Genome Res.">
        <title>The status, quality, and expansion of the NIH full-length cDNA project: the Mammalian Gene Collection (MGC).</title>
        <authorList>
            <consortium name="The MGC Project Team"/>
        </authorList>
    </citation>
    <scope>NUCLEOTIDE SEQUENCE [LARGE SCALE MRNA] (ISOFORM 1)</scope>
    <source>
        <strain>C57BL/6J</strain>
        <strain>FVB/N</strain>
        <tissue>Mammary gland</tissue>
        <tissue>Retina</tissue>
    </source>
</reference>
<reference key="7">
    <citation type="journal article" date="2003" name="Biochem. J.">
        <title>Functional characterization of the non-catalytic ectodomains of the nucleotide pyrophosphatase/phosphodiesterase NPP1.</title>
        <authorList>
            <person name="Gijsbers R."/>
            <person name="Ceulemans H."/>
            <person name="Bollen M."/>
        </authorList>
    </citation>
    <scope>DOMAIN</scope>
</reference>
<reference key="8">
    <citation type="journal article" date="2005" name="Diabetologia">
        <title>Potential involvement of adipocyte insulin resistance in obesity-associated up-regulation of adipocyte lysophospholipase D/autotaxin expression.</title>
        <authorList>
            <person name="Boucher J."/>
            <person name="Quilliot D."/>
            <person name="Pradere J.P."/>
            <person name="Simon M.F."/>
            <person name="Gres S."/>
            <person name="Guigne C."/>
            <person name="Prevot D."/>
            <person name="Ferry G."/>
            <person name="Boutin J.A."/>
            <person name="Carpene C."/>
            <person name="Valet P."/>
            <person name="Saulnier-Blache J.S."/>
        </authorList>
    </citation>
    <scope>INDUCTION</scope>
    <scope>POSSIBLE FUNCTION IN OBESITY</scope>
</reference>
<reference key="9">
    <citation type="journal article" date="2007" name="Biochim. Biophys. Acta">
        <title>Secretion and lysophospholipase D activity of autotaxin by adipocytes are controlled by N-glycosylation and signal peptidase.</title>
        <authorList>
            <person name="Pradere J.P."/>
            <person name="Tarnus E."/>
            <person name="Gres S."/>
            <person name="Valet P."/>
            <person name="Saulnier-Blache J.S."/>
        </authorList>
    </citation>
    <scope>PROTEOLYTIC CLEAVAGE</scope>
    <scope>SUBCELLULAR LOCATION</scope>
    <scope>FUNCTION</scope>
    <scope>CATALYTIC ACTIVITY</scope>
    <scope>GLYCOSYLATION</scope>
    <scope>MUTAGENESIS OF 12-VAL--VAL-22; 12-VAL--GLY-27; 23-ASN--GLY-27; CYS-25; GLY-27; 27-GLY--ALA-30; 27-GLY--ARG-35; 30-ALA--ILE-33; 30-ALA--GLY-41; 32-ARG--ARG-35; 36-ALA--GLU-40; ASN-53 AND ASN-410</scope>
</reference>
<reference key="10">
    <citation type="journal article" date="2009" name="J. Biol. Chem.">
        <title>Domain interplay mediated by an essential disulfide linkage is critical for the activity and secretion of the metastasis-promoting enzyme autotaxin.</title>
        <authorList>
            <person name="Jansen S."/>
            <person name="Andries M."/>
            <person name="Derua R."/>
            <person name="Waelkens E."/>
            <person name="Bollen M."/>
        </authorList>
    </citation>
    <scope>SUBCELLULAR LOCATION</scope>
    <scope>INTERDOMAIN DISULFIDE BOND</scope>
    <scope>MUTAGENESIS OF 851-LEU--THR-853; LEU-851; LYS-852 AND THR-853</scope>
</reference>
<reference key="11">
    <citation type="journal article" date="2010" name="Cell">
        <title>A tissue-specific atlas of mouse protein phosphorylation and expression.</title>
        <authorList>
            <person name="Huttlin E.L."/>
            <person name="Jedrychowski M.P."/>
            <person name="Elias J.E."/>
            <person name="Goswami T."/>
            <person name="Rad R."/>
            <person name="Beausoleil S.A."/>
            <person name="Villen J."/>
            <person name="Haas W."/>
            <person name="Sowa M.E."/>
            <person name="Gygi S.P."/>
        </authorList>
    </citation>
    <scope>IDENTIFICATION BY MASS SPECTROMETRY [LARGE SCALE ANALYSIS]</scope>
    <source>
        <tissue>Brain</tissue>
    </source>
</reference>
<reference key="12">
    <citation type="journal article" date="2017" name="J. Med. Chem.">
        <title>Discovery of 2-[[2-Ethyl-6-[4-[2-(3-hydroxyazetidin-1-yl)-2-oxoethyl]piperazin-1-yl]-8-methylimidazo[1,2-a]pyridin-3-yl]methylamino]-4-(4-fluorophenyl)thiazole-5-carbonitrile (GLPG1690), a First-in-Class Autotaxin Inhibitor Undergoing Clinical Evaluation for the Treatment of Idiopathic Pulmonary Fibrosis.</title>
        <authorList>
            <person name="Desroy N."/>
            <person name="Housseman C."/>
            <person name="Bock X."/>
            <person name="Joncour A."/>
            <person name="Bienvenu N."/>
            <person name="Cherel L."/>
            <person name="Labeguere V."/>
            <person name="Rondet E."/>
            <person name="Peixoto C."/>
            <person name="Grassot J.M."/>
            <person name="Picolet O."/>
            <person name="Annoot D."/>
            <person name="Triballeau N."/>
            <person name="Monjardet A."/>
            <person name="Wakselman E."/>
            <person name="Roncoroni V."/>
            <person name="Le Tallec S."/>
            <person name="Blanque R."/>
            <person name="Cottereaux C."/>
            <person name="Vandervoort N."/>
            <person name="Christophe T."/>
            <person name="Mollat P."/>
            <person name="Lamers M."/>
            <person name="Auberval M."/>
            <person name="Hrvacic B."/>
            <person name="Ralic J."/>
            <person name="Oste L."/>
            <person name="van der Aar E."/>
            <person name="Brys R."/>
            <person name="Heckmann B."/>
        </authorList>
    </citation>
    <scope>FUNCTION</scope>
</reference>
<reference evidence="21 22 23 24 25 26" key="13">
    <citation type="journal article" date="2011" name="Nat. Struct. Mol. Biol.">
        <title>Crystal structure of autotaxin and insight into GPCR activation by lipid mediators.</title>
        <authorList>
            <person name="Nishimasu H."/>
            <person name="Okudaira S."/>
            <person name="Hama K."/>
            <person name="Mihara E."/>
            <person name="Dohmae N."/>
            <person name="Inoue A."/>
            <person name="Ishitani R."/>
            <person name="Takagi J."/>
            <person name="Aoki J."/>
            <person name="Nureki O."/>
        </authorList>
    </citation>
    <scope>X-RAY CRYSTALLOGRAPHY (1.7 ANGSTROMS) OF 36-862 IN COMPLEXES WITH LYSOPHOSPHATIDIC ACIDS; ZINC AND CALCIUM IONS</scope>
    <scope>FUNCTION</scope>
    <scope>CATALYTIC ACTIVITY</scope>
    <scope>COFACTOR</scope>
    <scope>DISULFIDE BONDS</scope>
    <scope>GLYCOSYLATION AT ASN-53; ASN-410 AND ASN-524</scope>
    <scope>SUBCELLULAR LOCATION</scope>
    <scope>MUTAGENESIS OF PHE-210; LEU-213; ASN-230; LEU-243; GLU-247 AND PHE-249</scope>
</reference>
<reference evidence="31 32 33 34" key="14">
    <citation type="journal article" date="2012" name="Proc. Natl. Acad. Sci. U.S.A.">
        <title>Crystal structure of Enpp1, an extracellular glycoprotein involved in bone mineralization and insulin signaling.</title>
        <authorList>
            <person name="Kato K."/>
            <person name="Nishimasu H."/>
            <person name="Okudaira S."/>
            <person name="Mihara E."/>
            <person name="Ishitani R."/>
            <person name="Takagi J."/>
            <person name="Aoki J."/>
            <person name="Nureki O."/>
        </authorList>
    </citation>
    <scope>X-RAY CRYSTALLOGRAPHY (2.70 ANGSTROMS) OF 51-58</scope>
</reference>
<reference evidence="27 28 29 30" key="15">
    <citation type="journal article" date="2013" name="ACS Chem. Biol.">
        <title>Screening and X-ray crystal structure-based optimization of autotaxin (ENPP2) inhibitors, using a newly developed fluorescence probe.</title>
        <authorList>
            <person name="Kawaguchi M."/>
            <person name="Okabe T."/>
            <person name="Okudaira S."/>
            <person name="Nishimasu H."/>
            <person name="Ishitani R."/>
            <person name="Kojima H."/>
            <person name="Nureki O."/>
            <person name="Aoki J."/>
            <person name="Nagano T."/>
        </authorList>
    </citation>
    <scope>X-RAY CRYSTALLOGRAPHY (1.75 ANGSTROMS) OF 36-862 IN COMPLEXES WITH INHIBITORS; CALCIUM AND ZINC</scope>
    <scope>GLYCOSYLATION AT ASN-53; ASN-410 AND ASN-524</scope>
    <scope>CATALYTIC ACTIVITY</scope>
    <scope>COFACTOR</scope>
    <scope>DISULFIDE BOND</scope>
</reference>
<reference evidence="37" key="16">
    <citation type="journal article" date="2016" name="Bioorg. Med. Chem. Lett.">
        <title>Discovery of potent inhibitors of the lysophospholipase autotaxin.</title>
        <authorList>
            <person name="Shah P."/>
            <person name="Cheasty A."/>
            <person name="Foxton C."/>
            <person name="Raynham T."/>
            <person name="Farooq M."/>
            <person name="Gutierrez I.F."/>
            <person name="Lejeune A."/>
            <person name="Pritchard M."/>
            <person name="Turnbull A."/>
            <person name="Pang L."/>
            <person name="Owen P."/>
            <person name="Boyd S."/>
            <person name="Stowell A."/>
            <person name="Jordan A."/>
            <person name="Hamilton N.M."/>
            <person name="Hitchin J.R."/>
            <person name="Stockley M."/>
            <person name="MacDonald E."/>
            <person name="Quesada M.J."/>
            <person name="Trivier E."/>
            <person name="Skeete J."/>
            <person name="Ovaa H."/>
            <person name="Moolenaar W.H."/>
            <person name="Ryder H."/>
        </authorList>
    </citation>
    <scope>X-RAY CRYSTALLOGRAPHY (1.92 ANGSTROMS) OF 36-862 IN COMPLEX WITH SYNTHETIC INHIBITOR; CALCIUM AND ZINC</scope>
    <scope>FUNCTION</scope>
    <scope>CATALYTIC ACTIVITY</scope>
    <scope>COFACTOR</scope>
    <scope>GLYCOSYLATION AT ASN-410 AND ASN-524</scope>
    <scope>DISULFIDE BONDS</scope>
</reference>
<reference evidence="38 39" key="17">
    <citation type="journal article" date="2017" name="ACS Med. Chem. Lett.">
        <title>Discovery of BI-2545: A Novel Autotaxin Inhibitor That Significantly Reduces LPA Levels in Vivo.</title>
        <authorList>
            <person name="Kuttruff C.A."/>
            <person name="Ferrara M."/>
            <person name="Bretschneider T."/>
            <person name="Hoerer S."/>
            <person name="Handschuh S."/>
            <person name="Nosse B."/>
            <person name="Romig H."/>
            <person name="Nicklin P."/>
            <person name="Roth G.J."/>
        </authorList>
    </citation>
    <scope>X-RAY CRYSTALLOGRAPHY (1.66 ANGSTROMS) OF 36-862 IN COMPLEX WITH SYNTHETIC INHIBITOR; CALCIUM AND ZINC</scope>
    <scope>GLYCOSYLATION AT ASN-53; ASN-410 AND ASN-524</scope>
    <scope>DISULFIDE BONDS</scope>
</reference>
<dbReference type="EC" id="3.1.4.39" evidence="6 7 9 10 11"/>
<dbReference type="EC" id="3.1.4.4" evidence="1"/>
<dbReference type="EMBL" id="AF123542">
    <property type="protein sequence ID" value="AAD46480.1"/>
    <property type="molecule type" value="mRNA"/>
</dbReference>
<dbReference type="EMBL" id="EU131009">
    <property type="protein sequence ID" value="ABW38314.1"/>
    <property type="molecule type" value="mRNA"/>
</dbReference>
<dbReference type="EMBL" id="EU131010">
    <property type="protein sequence ID" value="ABW38315.1"/>
    <property type="molecule type" value="mRNA"/>
</dbReference>
<dbReference type="EMBL" id="EU677474">
    <property type="protein sequence ID" value="ACD12865.1"/>
    <property type="molecule type" value="Genomic_DNA"/>
</dbReference>
<dbReference type="EMBL" id="EU677475">
    <property type="protein sequence ID" value="ACD12866.1"/>
    <property type="molecule type" value="Genomic_DNA"/>
</dbReference>
<dbReference type="EMBL" id="AK161144">
    <property type="protein sequence ID" value="BAE36214.1"/>
    <property type="molecule type" value="mRNA"/>
</dbReference>
<dbReference type="EMBL" id="CH466545">
    <property type="protein sequence ID" value="EDL29265.1"/>
    <property type="molecule type" value="Genomic_DNA"/>
</dbReference>
<dbReference type="EMBL" id="BC003264">
    <property type="protein sequence ID" value="AAH03264.1"/>
    <property type="molecule type" value="mRNA"/>
</dbReference>
<dbReference type="EMBL" id="BC058759">
    <property type="protein sequence ID" value="AAH58759.1"/>
    <property type="molecule type" value="mRNA"/>
</dbReference>
<dbReference type="CCDS" id="CCDS27472.1">
    <molecule id="Q9R1E6-1"/>
</dbReference>
<dbReference type="CCDS" id="CCDS49607.1">
    <molecule id="Q9R1E6-2"/>
</dbReference>
<dbReference type="CCDS" id="CCDS70628.1">
    <molecule id="Q9R1E6-3"/>
</dbReference>
<dbReference type="RefSeq" id="NP_001129549.1">
    <molecule id="Q9R1E6-2"/>
    <property type="nucleotide sequence ID" value="NM_001136077.3"/>
</dbReference>
<dbReference type="RefSeq" id="NP_001272923.1">
    <molecule id="Q9R1E6-3"/>
    <property type="nucleotide sequence ID" value="NM_001285994.2"/>
</dbReference>
<dbReference type="RefSeq" id="NP_001272924.1">
    <property type="nucleotide sequence ID" value="NM_001285995.2"/>
</dbReference>
<dbReference type="RefSeq" id="NP_056559.2">
    <molecule id="Q9R1E6-1"/>
    <property type="nucleotide sequence ID" value="NM_015744.4"/>
</dbReference>
<dbReference type="PDB" id="3NKM">
    <property type="method" value="X-ray"/>
    <property type="resolution" value="2.00 A"/>
    <property type="chains" value="A=36-862"/>
</dbReference>
<dbReference type="PDB" id="3NKN">
    <property type="method" value="X-ray"/>
    <property type="resolution" value="1.80 A"/>
    <property type="chains" value="A=36-862"/>
</dbReference>
<dbReference type="PDB" id="3NKO">
    <property type="method" value="X-ray"/>
    <property type="resolution" value="1.75 A"/>
    <property type="chains" value="A=36-862"/>
</dbReference>
<dbReference type="PDB" id="3NKP">
    <property type="method" value="X-ray"/>
    <property type="resolution" value="1.75 A"/>
    <property type="chains" value="A=36-862"/>
</dbReference>
<dbReference type="PDB" id="3NKQ">
    <property type="method" value="X-ray"/>
    <property type="resolution" value="1.70 A"/>
    <property type="chains" value="A=36-862"/>
</dbReference>
<dbReference type="PDB" id="3NKR">
    <property type="method" value="X-ray"/>
    <property type="resolution" value="1.70 A"/>
    <property type="chains" value="A=36-862"/>
</dbReference>
<dbReference type="PDB" id="3WAV">
    <property type="method" value="X-ray"/>
    <property type="resolution" value="1.80 A"/>
    <property type="chains" value="A=36-862"/>
</dbReference>
<dbReference type="PDB" id="3WAW">
    <property type="method" value="X-ray"/>
    <property type="resolution" value="1.95 A"/>
    <property type="chains" value="A=36-862"/>
</dbReference>
<dbReference type="PDB" id="3WAX">
    <property type="method" value="X-ray"/>
    <property type="resolution" value="1.90 A"/>
    <property type="chains" value="A=36-862"/>
</dbReference>
<dbReference type="PDB" id="3WAY">
    <property type="method" value="X-ray"/>
    <property type="resolution" value="1.75 A"/>
    <property type="chains" value="A=36-862"/>
</dbReference>
<dbReference type="PDB" id="4GTW">
    <property type="method" value="X-ray"/>
    <property type="resolution" value="2.70 A"/>
    <property type="chains" value="A/B=51-58"/>
</dbReference>
<dbReference type="PDB" id="4GTX">
    <property type="method" value="X-ray"/>
    <property type="resolution" value="3.20 A"/>
    <property type="chains" value="A/B=51-58"/>
</dbReference>
<dbReference type="PDB" id="4GTY">
    <property type="method" value="X-ray"/>
    <property type="resolution" value="3.19 A"/>
    <property type="chains" value="A/B=51-58"/>
</dbReference>
<dbReference type="PDB" id="4GTZ">
    <property type="method" value="X-ray"/>
    <property type="resolution" value="3.19 A"/>
    <property type="chains" value="A/B=51-58"/>
</dbReference>
<dbReference type="PDB" id="5HRT">
    <property type="method" value="X-ray"/>
    <property type="resolution" value="2.00 A"/>
    <property type="chains" value="A=36-862"/>
</dbReference>
<dbReference type="PDB" id="5INH">
    <property type="method" value="X-ray"/>
    <property type="resolution" value="1.84 A"/>
    <property type="chains" value="A=36-862"/>
</dbReference>
<dbReference type="PDB" id="5JVG">
    <property type="method" value="X-ray"/>
    <property type="resolution" value="3.43 A"/>
    <property type="chains" value="U=1-81"/>
</dbReference>
<dbReference type="PDB" id="5LIA">
    <property type="method" value="X-ray"/>
    <property type="resolution" value="1.92 A"/>
    <property type="chains" value="A=36-862"/>
</dbReference>
<dbReference type="PDB" id="5OHI">
    <property type="method" value="X-ray"/>
    <property type="resolution" value="1.66 A"/>
    <property type="chains" value="A=36-862"/>
</dbReference>
<dbReference type="PDB" id="5OLB">
    <property type="method" value="X-ray"/>
    <property type="resolution" value="1.82 A"/>
    <property type="chains" value="A=36-862"/>
</dbReference>
<dbReference type="PDB" id="6LEH">
    <property type="method" value="X-ray"/>
    <property type="resolution" value="2.00 A"/>
    <property type="chains" value="A=36-862"/>
</dbReference>
<dbReference type="PDB" id="6Y5M">
    <property type="method" value="X-ray"/>
    <property type="resolution" value="2.01 A"/>
    <property type="chains" value="A=36-862"/>
</dbReference>
<dbReference type="PDB" id="7MFH">
    <property type="method" value="X-ray"/>
    <property type="resolution" value="2.30 A"/>
    <property type="chains" value="A=36-862"/>
</dbReference>
<dbReference type="PDBsum" id="3NKM"/>
<dbReference type="PDBsum" id="3NKN"/>
<dbReference type="PDBsum" id="3NKO"/>
<dbReference type="PDBsum" id="3NKP"/>
<dbReference type="PDBsum" id="3NKQ"/>
<dbReference type="PDBsum" id="3NKR"/>
<dbReference type="PDBsum" id="3WAV"/>
<dbReference type="PDBsum" id="3WAW"/>
<dbReference type="PDBsum" id="3WAX"/>
<dbReference type="PDBsum" id="3WAY"/>
<dbReference type="PDBsum" id="4GTW"/>
<dbReference type="PDBsum" id="4GTX"/>
<dbReference type="PDBsum" id="4GTY"/>
<dbReference type="PDBsum" id="4GTZ"/>
<dbReference type="PDBsum" id="5HRT"/>
<dbReference type="PDBsum" id="5INH"/>
<dbReference type="PDBsum" id="5JVG"/>
<dbReference type="PDBsum" id="5LIA"/>
<dbReference type="PDBsum" id="5OHI"/>
<dbReference type="PDBsum" id="5OLB"/>
<dbReference type="PDBsum" id="6LEH"/>
<dbReference type="PDBsum" id="6Y5M"/>
<dbReference type="PDBsum" id="7MFH"/>
<dbReference type="SMR" id="Q9R1E6"/>
<dbReference type="BioGRID" id="202098">
    <property type="interactions" value="1"/>
</dbReference>
<dbReference type="FunCoup" id="Q9R1E6">
    <property type="interactions" value="656"/>
</dbReference>
<dbReference type="STRING" id="10090.ENSMUSP00000128941"/>
<dbReference type="BindingDB" id="Q9R1E6"/>
<dbReference type="ChEMBL" id="CHEMBL3826871"/>
<dbReference type="GuidetoPHARMACOLOGY" id="2901"/>
<dbReference type="GlyConnect" id="2275">
    <property type="glycosylation" value="5 N-Linked glycans (2 sites)"/>
</dbReference>
<dbReference type="GlyCosmos" id="Q9R1E6">
    <property type="glycosylation" value="4 sites, 5 glycans"/>
</dbReference>
<dbReference type="GlyGen" id="Q9R1E6">
    <property type="glycosylation" value="4 sites, 7 N-linked glycans (2 sites)"/>
</dbReference>
<dbReference type="iPTMnet" id="Q9R1E6"/>
<dbReference type="PhosphoSitePlus" id="Q9R1E6"/>
<dbReference type="PaxDb" id="10090-ENSMUSP00000132640"/>
<dbReference type="PeptideAtlas" id="Q9R1E6"/>
<dbReference type="ProteomicsDB" id="275871">
    <molecule id="Q9R1E6-1"/>
</dbReference>
<dbReference type="ProteomicsDB" id="275872">
    <molecule id="Q9R1E6-2"/>
</dbReference>
<dbReference type="ProteomicsDB" id="275873">
    <molecule id="Q9R1E6-3"/>
</dbReference>
<dbReference type="Antibodypedia" id="13653">
    <property type="antibodies" value="497 antibodies from 38 providers"/>
</dbReference>
<dbReference type="DNASU" id="18606"/>
<dbReference type="Ensembl" id="ENSMUST00000041591.16">
    <molecule id="Q9R1E6-1"/>
    <property type="protein sequence ID" value="ENSMUSP00000036180.10"/>
    <property type="gene ID" value="ENSMUSG00000022425.17"/>
</dbReference>
<dbReference type="Ensembl" id="ENSMUST00000167541.3">
    <molecule id="Q9R1E6-3"/>
    <property type="protein sequence ID" value="ENSMUSP00000132640.3"/>
    <property type="gene ID" value="ENSMUSG00000022425.17"/>
</dbReference>
<dbReference type="Ensembl" id="ENSMUST00000171545.9">
    <molecule id="Q9R1E6-2"/>
    <property type="protein sequence ID" value="ENSMUSP00000128941.2"/>
    <property type="gene ID" value="ENSMUSG00000022425.17"/>
</dbReference>
<dbReference type="GeneID" id="18606"/>
<dbReference type="KEGG" id="mmu:18606"/>
<dbReference type="UCSC" id="uc007vro.3">
    <molecule id="Q9R1E6-1"/>
    <property type="organism name" value="mouse"/>
</dbReference>
<dbReference type="UCSC" id="uc007vrq.3">
    <molecule id="Q9R1E6-3"/>
    <property type="organism name" value="mouse"/>
</dbReference>
<dbReference type="UCSC" id="uc011zsx.2">
    <molecule id="Q9R1E6-2"/>
    <property type="organism name" value="mouse"/>
</dbReference>
<dbReference type="AGR" id="MGI:1321390"/>
<dbReference type="CTD" id="5168"/>
<dbReference type="MGI" id="MGI:1321390">
    <property type="gene designation" value="Enpp2"/>
</dbReference>
<dbReference type="VEuPathDB" id="HostDB:ENSMUSG00000022425"/>
<dbReference type="eggNOG" id="KOG2645">
    <property type="taxonomic scope" value="Eukaryota"/>
</dbReference>
<dbReference type="GeneTree" id="ENSGT00940000155778"/>
<dbReference type="HOGENOM" id="CLU_012256_0_0_1"/>
<dbReference type="InParanoid" id="Q9R1E6"/>
<dbReference type="OMA" id="NICLGYT"/>
<dbReference type="PhylomeDB" id="Q9R1E6"/>
<dbReference type="TreeFam" id="TF330032"/>
<dbReference type="BRENDA" id="3.1.4.39">
    <property type="organism ID" value="3474"/>
</dbReference>
<dbReference type="SABIO-RK" id="Q9R1E6"/>
<dbReference type="BioGRID-ORCS" id="18606">
    <property type="hits" value="1 hit in 77 CRISPR screens"/>
</dbReference>
<dbReference type="ChiTaRS" id="Enpp2">
    <property type="organism name" value="mouse"/>
</dbReference>
<dbReference type="EvolutionaryTrace" id="Q9R1E6"/>
<dbReference type="PRO" id="PR:Q9R1E6"/>
<dbReference type="Proteomes" id="UP000000589">
    <property type="component" value="Chromosome 15"/>
</dbReference>
<dbReference type="RNAct" id="Q9R1E6">
    <property type="molecule type" value="protein"/>
</dbReference>
<dbReference type="Bgee" id="ENSMUSG00000022425">
    <property type="expression patterns" value="Expressed in choroid plexus epithelium and 361 other cell types or tissues"/>
</dbReference>
<dbReference type="ExpressionAtlas" id="Q9R1E6">
    <property type="expression patterns" value="baseline and differential"/>
</dbReference>
<dbReference type="GO" id="GO:0005615">
    <property type="term" value="C:extracellular space"/>
    <property type="evidence" value="ECO:0000314"/>
    <property type="project" value="UniProtKB"/>
</dbReference>
<dbReference type="GO" id="GO:0005886">
    <property type="term" value="C:plasma membrane"/>
    <property type="evidence" value="ECO:0000250"/>
    <property type="project" value="MGI"/>
</dbReference>
<dbReference type="GO" id="GO:0047391">
    <property type="term" value="F:alkylglycerophosphoethanolamine phosphodiesterase activity"/>
    <property type="evidence" value="ECO:0000314"/>
    <property type="project" value="MGI"/>
</dbReference>
<dbReference type="GO" id="GO:0005509">
    <property type="term" value="F:calcium ion binding"/>
    <property type="evidence" value="ECO:0000314"/>
    <property type="project" value="UniProtKB"/>
</dbReference>
<dbReference type="GO" id="GO:0004551">
    <property type="term" value="F:dinucleotide phosphatase activity"/>
    <property type="evidence" value="ECO:0000250"/>
    <property type="project" value="MGI"/>
</dbReference>
<dbReference type="GO" id="GO:0004622">
    <property type="term" value="F:lysophospholipase activity"/>
    <property type="evidence" value="ECO:0000314"/>
    <property type="project" value="UniProtKB"/>
</dbReference>
<dbReference type="GO" id="GO:0003676">
    <property type="term" value="F:nucleic acid binding"/>
    <property type="evidence" value="ECO:0007669"/>
    <property type="project" value="InterPro"/>
</dbReference>
<dbReference type="GO" id="GO:0004528">
    <property type="term" value="F:phosphodiesterase I activity"/>
    <property type="evidence" value="ECO:0000250"/>
    <property type="project" value="MGI"/>
</dbReference>
<dbReference type="GO" id="GO:0004630">
    <property type="term" value="F:phospholipase D activity"/>
    <property type="evidence" value="ECO:0007669"/>
    <property type="project" value="RHEA"/>
</dbReference>
<dbReference type="GO" id="GO:0030247">
    <property type="term" value="F:polysaccharide binding"/>
    <property type="evidence" value="ECO:0007669"/>
    <property type="project" value="InterPro"/>
</dbReference>
<dbReference type="GO" id="GO:0005044">
    <property type="term" value="F:scavenger receptor activity"/>
    <property type="evidence" value="ECO:0007669"/>
    <property type="project" value="InterPro"/>
</dbReference>
<dbReference type="GO" id="GO:0008270">
    <property type="term" value="F:zinc ion binding"/>
    <property type="evidence" value="ECO:0000314"/>
    <property type="project" value="UniProtKB"/>
</dbReference>
<dbReference type="GO" id="GO:0006935">
    <property type="term" value="P:chemotaxis"/>
    <property type="evidence" value="ECO:0007669"/>
    <property type="project" value="UniProtKB-KW"/>
</dbReference>
<dbReference type="GO" id="GO:0006955">
    <property type="term" value="P:immune response"/>
    <property type="evidence" value="ECO:0007669"/>
    <property type="project" value="InterPro"/>
</dbReference>
<dbReference type="GO" id="GO:0034638">
    <property type="term" value="P:phosphatidylcholine catabolic process"/>
    <property type="evidence" value="ECO:0000314"/>
    <property type="project" value="UniProtKB"/>
</dbReference>
<dbReference type="GO" id="GO:0006644">
    <property type="term" value="P:phospholipid metabolic process"/>
    <property type="evidence" value="ECO:0000314"/>
    <property type="project" value="MGI"/>
</dbReference>
<dbReference type="GO" id="GO:0010634">
    <property type="term" value="P:positive regulation of epithelial cell migration"/>
    <property type="evidence" value="ECO:0007669"/>
    <property type="project" value="Ensembl"/>
</dbReference>
<dbReference type="GO" id="GO:2000394">
    <property type="term" value="P:positive regulation of lamellipodium morphogenesis"/>
    <property type="evidence" value="ECO:0007669"/>
    <property type="project" value="Ensembl"/>
</dbReference>
<dbReference type="GO" id="GO:0030149">
    <property type="term" value="P:sphingolipid catabolic process"/>
    <property type="evidence" value="ECO:0000250"/>
    <property type="project" value="UniProtKB"/>
</dbReference>
<dbReference type="CDD" id="cd16018">
    <property type="entry name" value="Enpp"/>
    <property type="match status" value="1"/>
</dbReference>
<dbReference type="CDD" id="cd00091">
    <property type="entry name" value="NUC"/>
    <property type="match status" value="1"/>
</dbReference>
<dbReference type="FunFam" id="3.40.570.10:FF:000001">
    <property type="entry name" value="Ectonucleotide pyrophosphatase/phosphodiesterase family member 2"/>
    <property type="match status" value="1"/>
</dbReference>
<dbReference type="FunFam" id="3.40.720.10:FF:000006">
    <property type="entry name" value="Ectonucleotide pyrophosphatase/phosphodiesterase family member 2"/>
    <property type="match status" value="1"/>
</dbReference>
<dbReference type="FunFam" id="4.10.410.20:FF:000001">
    <property type="entry name" value="Ectonucleotide pyrophosphatase/phosphodiesterase family member 2"/>
    <property type="match status" value="1"/>
</dbReference>
<dbReference type="FunFam" id="4.10.410.20:FF:000002">
    <property type="entry name" value="Ectonucleotide pyrophosphatase/phosphodiesterase family member 2"/>
    <property type="match status" value="1"/>
</dbReference>
<dbReference type="Gene3D" id="4.10.410.20">
    <property type="match status" value="2"/>
</dbReference>
<dbReference type="Gene3D" id="3.40.720.10">
    <property type="entry name" value="Alkaline Phosphatase, subunit A"/>
    <property type="match status" value="1"/>
</dbReference>
<dbReference type="Gene3D" id="3.40.570.10">
    <property type="entry name" value="Extracellular Endonuclease, subunit A"/>
    <property type="match status" value="1"/>
</dbReference>
<dbReference type="InterPro" id="IPR017850">
    <property type="entry name" value="Alkaline_phosphatase_core_sf"/>
</dbReference>
<dbReference type="InterPro" id="IPR044929">
    <property type="entry name" value="DNA/RNA_non-sp_Endonuclease_sf"/>
</dbReference>
<dbReference type="InterPro" id="IPR001604">
    <property type="entry name" value="Endo_G_ENPP1-like_dom"/>
</dbReference>
<dbReference type="InterPro" id="IPR020821">
    <property type="entry name" value="ENPP1-3/EXOG-like_nuc-like"/>
</dbReference>
<dbReference type="InterPro" id="IPR044925">
    <property type="entry name" value="His-Me_finger_sf"/>
</dbReference>
<dbReference type="InterPro" id="IPR002591">
    <property type="entry name" value="Phosphodiest/P_Trfase"/>
</dbReference>
<dbReference type="InterPro" id="IPR020436">
    <property type="entry name" value="SMB_chordata"/>
</dbReference>
<dbReference type="InterPro" id="IPR036024">
    <property type="entry name" value="Somatomedin_B-like_dom_sf"/>
</dbReference>
<dbReference type="InterPro" id="IPR001212">
    <property type="entry name" value="Somatomedin_B_dom"/>
</dbReference>
<dbReference type="PANTHER" id="PTHR10151">
    <property type="entry name" value="ECTONUCLEOTIDE PYROPHOSPHATASE/PHOSPHODIESTERASE"/>
    <property type="match status" value="1"/>
</dbReference>
<dbReference type="PANTHER" id="PTHR10151:SF21">
    <property type="entry name" value="ECTONUCLEOTIDE PYROPHOSPHATASE_PHOSPHODIESTERASE FAMILY MEMBER 2"/>
    <property type="match status" value="1"/>
</dbReference>
<dbReference type="Pfam" id="PF01223">
    <property type="entry name" value="Endonuclease_NS"/>
    <property type="match status" value="1"/>
</dbReference>
<dbReference type="Pfam" id="PF01663">
    <property type="entry name" value="Phosphodiest"/>
    <property type="match status" value="1"/>
</dbReference>
<dbReference type="Pfam" id="PF01033">
    <property type="entry name" value="Somatomedin_B"/>
    <property type="match status" value="2"/>
</dbReference>
<dbReference type="PRINTS" id="PR00022">
    <property type="entry name" value="SOMATOMEDINB"/>
</dbReference>
<dbReference type="SMART" id="SM00892">
    <property type="entry name" value="Endonuclease_NS"/>
    <property type="match status" value="1"/>
</dbReference>
<dbReference type="SMART" id="SM00477">
    <property type="entry name" value="NUC"/>
    <property type="match status" value="1"/>
</dbReference>
<dbReference type="SMART" id="SM00201">
    <property type="entry name" value="SO"/>
    <property type="match status" value="2"/>
</dbReference>
<dbReference type="SUPFAM" id="SSF53649">
    <property type="entry name" value="Alkaline phosphatase-like"/>
    <property type="match status" value="1"/>
</dbReference>
<dbReference type="SUPFAM" id="SSF54060">
    <property type="entry name" value="His-Me finger endonucleases"/>
    <property type="match status" value="1"/>
</dbReference>
<dbReference type="SUPFAM" id="SSF90188">
    <property type="entry name" value="Somatomedin B domain"/>
    <property type="match status" value="2"/>
</dbReference>
<dbReference type="PROSITE" id="PS00524">
    <property type="entry name" value="SMB_1"/>
    <property type="match status" value="2"/>
</dbReference>
<dbReference type="PROSITE" id="PS50958">
    <property type="entry name" value="SMB_2"/>
    <property type="match status" value="2"/>
</dbReference>
<protein>
    <recommendedName>
        <fullName evidence="15">Autotaxin</fullName>
        <ecNumber evidence="6 7 9 10 11">3.1.4.39</ecNumber>
        <ecNumber evidence="1">3.1.4.4</ecNumber>
    </recommendedName>
    <alternativeName>
        <fullName evidence="20">Ectonucleotide pyrophosphatase/phosphodiesterase family member 2</fullName>
        <shortName>E-NPP 2</shortName>
    </alternativeName>
    <alternativeName>
        <fullName>Extracellular lysophospholipase D</fullName>
        <shortName>LysoPLD</shortName>
    </alternativeName>
</protein>
<evidence type="ECO:0000250" key="1">
    <source>
        <dbReference type="UniProtKB" id="Q13822"/>
    </source>
</evidence>
<evidence type="ECO:0000250" key="2">
    <source>
        <dbReference type="UniProtKB" id="Q64610"/>
    </source>
</evidence>
<evidence type="ECO:0000255" key="3"/>
<evidence type="ECO:0000255" key="4">
    <source>
        <dbReference type="PROSITE-ProRule" id="PRU00350"/>
    </source>
</evidence>
<evidence type="ECO:0000269" key="5">
    <source>
    </source>
</evidence>
<evidence type="ECO:0000269" key="6">
    <source>
    </source>
</evidence>
<evidence type="ECO:0000269" key="7">
    <source>
    </source>
</evidence>
<evidence type="ECO:0000269" key="8">
    <source>
    </source>
</evidence>
<evidence type="ECO:0000269" key="9">
    <source>
    </source>
</evidence>
<evidence type="ECO:0000269" key="10">
    <source>
    </source>
</evidence>
<evidence type="ECO:0000269" key="11">
    <source>
    </source>
</evidence>
<evidence type="ECO:0000269" key="12">
    <source>
    </source>
</evidence>
<evidence type="ECO:0000269" key="13">
    <source>
    </source>
</evidence>
<evidence type="ECO:0000303" key="14">
    <source>
    </source>
</evidence>
<evidence type="ECO:0000303" key="15">
    <source>
    </source>
</evidence>
<evidence type="ECO:0000305" key="16"/>
<evidence type="ECO:0000305" key="17">
    <source>
    </source>
</evidence>
<evidence type="ECO:0000305" key="18">
    <source>
    </source>
</evidence>
<evidence type="ECO:0000305" key="19">
    <source>
    </source>
</evidence>
<evidence type="ECO:0000312" key="20">
    <source>
        <dbReference type="MGI" id="MGI:1321390"/>
    </source>
</evidence>
<evidence type="ECO:0007744" key="21">
    <source>
        <dbReference type="PDB" id="3NKM"/>
    </source>
</evidence>
<evidence type="ECO:0007744" key="22">
    <source>
        <dbReference type="PDB" id="3NKN"/>
    </source>
</evidence>
<evidence type="ECO:0007744" key="23">
    <source>
        <dbReference type="PDB" id="3NKO"/>
    </source>
</evidence>
<evidence type="ECO:0007744" key="24">
    <source>
        <dbReference type="PDB" id="3NKP"/>
    </source>
</evidence>
<evidence type="ECO:0007744" key="25">
    <source>
        <dbReference type="PDB" id="3NKQ"/>
    </source>
</evidence>
<evidence type="ECO:0007744" key="26">
    <source>
        <dbReference type="PDB" id="3NKR"/>
    </source>
</evidence>
<evidence type="ECO:0007744" key="27">
    <source>
        <dbReference type="PDB" id="3WAV"/>
    </source>
</evidence>
<evidence type="ECO:0007744" key="28">
    <source>
        <dbReference type="PDB" id="3WAW"/>
    </source>
</evidence>
<evidence type="ECO:0007744" key="29">
    <source>
        <dbReference type="PDB" id="3WAX"/>
    </source>
</evidence>
<evidence type="ECO:0007744" key="30">
    <source>
        <dbReference type="PDB" id="3WAY"/>
    </source>
</evidence>
<evidence type="ECO:0007744" key="31">
    <source>
        <dbReference type="PDB" id="4GTW"/>
    </source>
</evidence>
<evidence type="ECO:0007744" key="32">
    <source>
        <dbReference type="PDB" id="4GTX"/>
    </source>
</evidence>
<evidence type="ECO:0007744" key="33">
    <source>
        <dbReference type="PDB" id="4GTY"/>
    </source>
</evidence>
<evidence type="ECO:0007744" key="34">
    <source>
        <dbReference type="PDB" id="4GTZ"/>
    </source>
</evidence>
<evidence type="ECO:0007744" key="35">
    <source>
        <dbReference type="PDB" id="5HRT"/>
    </source>
</evidence>
<evidence type="ECO:0007744" key="36">
    <source>
        <dbReference type="PDB" id="5INH"/>
    </source>
</evidence>
<evidence type="ECO:0007744" key="37">
    <source>
        <dbReference type="PDB" id="5LIA"/>
    </source>
</evidence>
<evidence type="ECO:0007744" key="38">
    <source>
        <dbReference type="PDB" id="5OHI"/>
    </source>
</evidence>
<evidence type="ECO:0007744" key="39">
    <source>
        <dbReference type="PDB" id="5OLB"/>
    </source>
</evidence>
<evidence type="ECO:0007829" key="40">
    <source>
        <dbReference type="PDB" id="3NKQ"/>
    </source>
</evidence>
<evidence type="ECO:0007829" key="41">
    <source>
        <dbReference type="PDB" id="3WAV"/>
    </source>
</evidence>
<evidence type="ECO:0007829" key="42">
    <source>
        <dbReference type="PDB" id="3WAY"/>
    </source>
</evidence>
<evidence type="ECO:0007829" key="43">
    <source>
        <dbReference type="PDB" id="5HRT"/>
    </source>
</evidence>
<evidence type="ECO:0007829" key="44">
    <source>
        <dbReference type="PDB" id="5LIA"/>
    </source>
</evidence>
<evidence type="ECO:0007829" key="45">
    <source>
        <dbReference type="PDB" id="5OHI"/>
    </source>
</evidence>
<evidence type="ECO:0007829" key="46">
    <source>
        <dbReference type="PDB" id="6LEH"/>
    </source>
</evidence>
<sequence length="862" mass="98885">MARQGCFGSYQVISLFTFAIGVNLCLGFTASRIKRAEWDEGPPTVLSDSPWTNTSGSCKGRCFELQEVGPPDCRCDNLCKSYSSCCHDFDELCLKTARGWECTKDRCGEVRNEENACHCSEDCLSRGDCCTNYQVVCKGESHWVDDDCEEIRVPECPAGFVRPPLIIFSVDGFRASYMKKGSKVMPNIEKLRSCGTHAPYMRPVYPTKTFPNLYTLATGLYPESHGIVGNSMYDPVFDATFHLRGREKFNHRWWGGQPLWITATKQGVRAGTFFWSVSIPHERRILTILQWLSLPDNERPSVYAFYSEQPDFSGHKYGPFGPEMTNPLREIDKTVGQLMDGLKQLKLHRCVNVIFVGDHGMEDVTCDRTEFLSNYLTNVDDITLVPGTLGRIRPKIPNNLKYDPKAIIANLTCKKPDQHFKPYMKQHLPKRLHYANNRRIEDLHLLVERRWHVARKPLDVYKKPSGKCFFQGDHGFDNKVNSMQTVFVGYGPTFKYRTKVPPFENIELYNVMCDLLGLKPAPNNGTHGSLNHLLRTNTFRPTLPEEVSRPNYPGIMYLQSDFDLGCTCDDKVEPKNKLEELNKRLHTKGSTEERHLLYGRPAVLYRTSYDILYHTDFESGYSEIFLMPLWTSYTISKQAEVSSIPEHLTNCVRPDVRVSPGFSQNCLAYKNDKQMSYGFLFPPYLSSSPEAKYDAFLVTNMVPMYPAFKRVWTYFQRVLVKKYASERNGVNVISGPIFDYNYNGLRDIEDEIKQYVEGSSIPVPTHYYSIITSCLDFTQPADKCDGPLSVSSFILPHRPDNDESCNSSEDESKWVEELMKMHTARVRDIEHLTGLDFYRKTSRSYSEILTLKTYLHTYESEI</sequence>
<comment type="function">
    <text evidence="1 6 7 9 11 12 18">Secreted lysophospholipase D that hydrolyzes lysophospholipids to produce the signaling molecule lysophosphatidic acid (LPA) in extracellular fluids (PubMed:17208043, PubMed:27780639, PubMed:28414242). Its major substrate is lysophosphatidylcholine (PubMed:17208043, PubMed:27780639). Can also act on sphingosylphosphorylcholine producing sphingosine-1-phosphate, a modulator of cell motility. Can hydrolyze, in vitro, bis-pNPP, to some extent pNP-TMP, and barely ATP (PubMed:18175805). Involved in several motility-related processes such as angiogenesis and neurite outgrowth. Acts as an angiogenic factor by stimulating migration of smooth muscle cells and microtubule formation. Stimulates migration of melanoma cells, probably via a pertussis toxin-sensitive G protein. May have a role in induction of parturition (By similarity). Possible involvement in cell proliferation and adipose tissue development (Probable). Required for LPA production in activated platelets, cleaves the sn-1 lysophospholipids to generate sn-1 lysophosphatidic acids containing predominantly 18:2 and 20:4 fatty acids (By similarity). Shows a preference for the sn-1 to the sn-2 isomer of 1-O-alkyl-sn-glycero-3-phosphocholine (lyso-PAF) (By similarity).</text>
</comment>
<comment type="catalytic activity">
    <reaction evidence="6 7 9 10 11">
        <text>a 1-O-alkyl-sn-glycero-3-phosphoethanolamine + H2O = a 1-O-alkyl-sn-glycero-3-phosphate + ethanolamine + H(+)</text>
        <dbReference type="Rhea" id="RHEA:15965"/>
        <dbReference type="ChEBI" id="CHEBI:15377"/>
        <dbReference type="ChEBI" id="CHEBI:15378"/>
        <dbReference type="ChEBI" id="CHEBI:57603"/>
        <dbReference type="ChEBI" id="CHEBI:58014"/>
        <dbReference type="ChEBI" id="CHEBI:76168"/>
        <dbReference type="EC" id="3.1.4.39"/>
    </reaction>
</comment>
<comment type="catalytic activity">
    <reaction evidence="2">
        <text>a 1-acyl-sn-glycero-3-phosphoethanolamine + H2O = a 1-acyl-sn-glycero-3-phosphate + ethanolamine + H(+)</text>
        <dbReference type="Rhea" id="RHEA:39003"/>
        <dbReference type="ChEBI" id="CHEBI:15377"/>
        <dbReference type="ChEBI" id="CHEBI:15378"/>
        <dbReference type="ChEBI" id="CHEBI:57603"/>
        <dbReference type="ChEBI" id="CHEBI:57970"/>
        <dbReference type="ChEBI" id="CHEBI:64381"/>
    </reaction>
    <physiologicalReaction direction="left-to-right" evidence="2">
        <dbReference type="Rhea" id="RHEA:39004"/>
    </physiologicalReaction>
</comment>
<comment type="catalytic activity">
    <reaction evidence="2">
        <text>1-(9Z-octadecenoyl)-sn-glycero-3-phosphoethanolamine + H2O = 1-(9Z-octadecenoyl)-sn-glycero-3-phosphate + ethanolamine + H(+)</text>
        <dbReference type="Rhea" id="RHEA:38927"/>
        <dbReference type="ChEBI" id="CHEBI:15377"/>
        <dbReference type="ChEBI" id="CHEBI:15378"/>
        <dbReference type="ChEBI" id="CHEBI:57603"/>
        <dbReference type="ChEBI" id="CHEBI:74544"/>
        <dbReference type="ChEBI" id="CHEBI:74971"/>
    </reaction>
    <physiologicalReaction direction="left-to-right" evidence="2">
        <dbReference type="Rhea" id="RHEA:38928"/>
    </physiologicalReaction>
</comment>
<comment type="catalytic activity">
    <reaction evidence="1">
        <text>a 1-O-alkyl-sn-glycero-3-phosphocholine + H2O = a 1-O-alkyl-sn-glycero-3-phosphate + choline + H(+)</text>
        <dbReference type="Rhea" id="RHEA:39927"/>
        <dbReference type="ChEBI" id="CHEBI:15354"/>
        <dbReference type="ChEBI" id="CHEBI:15377"/>
        <dbReference type="ChEBI" id="CHEBI:15378"/>
        <dbReference type="ChEBI" id="CHEBI:30909"/>
        <dbReference type="ChEBI" id="CHEBI:58014"/>
    </reaction>
    <physiologicalReaction direction="left-to-right" evidence="1">
        <dbReference type="Rhea" id="RHEA:39928"/>
    </physiologicalReaction>
</comment>
<comment type="catalytic activity">
    <reaction evidence="1">
        <text>1-O-(9Z-octadecenyl)-sn-glycero-3-phosphocholine + H2O = 1-O-(9Z-octadecenyl)-sn-glycero-3-phosphate + choline + H(+)</text>
        <dbReference type="Rhea" id="RHEA:41684"/>
        <dbReference type="ChEBI" id="CHEBI:15354"/>
        <dbReference type="ChEBI" id="CHEBI:15377"/>
        <dbReference type="ChEBI" id="CHEBI:15378"/>
        <dbReference type="ChEBI" id="CHEBI:64396"/>
        <dbReference type="ChEBI" id="CHEBI:78402"/>
    </reaction>
    <physiologicalReaction direction="left-to-right" evidence="1">
        <dbReference type="Rhea" id="RHEA:41685"/>
    </physiologicalReaction>
</comment>
<comment type="catalytic activity">
    <reaction evidence="1">
        <text>1-O-hexadecyl-sn-glycero-3-phosphocholine + H2O = 1-O-hexadecyl-sn-glycero-3-phosphate + choline + H(+)</text>
        <dbReference type="Rhea" id="RHEA:41143"/>
        <dbReference type="ChEBI" id="CHEBI:15354"/>
        <dbReference type="ChEBI" id="CHEBI:15377"/>
        <dbReference type="ChEBI" id="CHEBI:15378"/>
        <dbReference type="ChEBI" id="CHEBI:64496"/>
        <dbReference type="ChEBI" id="CHEBI:77580"/>
    </reaction>
    <physiologicalReaction direction="left-to-right" evidence="1">
        <dbReference type="Rhea" id="RHEA:41144"/>
    </physiologicalReaction>
</comment>
<comment type="catalytic activity">
    <reaction evidence="1">
        <text>a 1-O-(1Z-alkenyl)-sn-glycero-3-phosphocholine + H2O = a 1-O-(1Z-alkenyl)-sn-glycero-3-phosphate + choline + H(+)</text>
        <dbReference type="Rhea" id="RHEA:41588"/>
        <dbReference type="ChEBI" id="CHEBI:15354"/>
        <dbReference type="ChEBI" id="CHEBI:15377"/>
        <dbReference type="ChEBI" id="CHEBI:15378"/>
        <dbReference type="ChEBI" id="CHEBI:77283"/>
        <dbReference type="ChEBI" id="CHEBI:77287"/>
    </reaction>
    <physiologicalReaction direction="left-to-right" evidence="1">
        <dbReference type="Rhea" id="RHEA:41589"/>
    </physiologicalReaction>
</comment>
<comment type="catalytic activity">
    <reaction evidence="1">
        <text>a 1-acyl-sn-glycero-3-phosphocholine + H2O = a 1-acyl-sn-glycero-3-phosphate + choline + H(+)</text>
        <dbReference type="Rhea" id="RHEA:38995"/>
        <dbReference type="ChEBI" id="CHEBI:15354"/>
        <dbReference type="ChEBI" id="CHEBI:15377"/>
        <dbReference type="ChEBI" id="CHEBI:15378"/>
        <dbReference type="ChEBI" id="CHEBI:57970"/>
        <dbReference type="ChEBI" id="CHEBI:58168"/>
        <dbReference type="EC" id="3.1.4.4"/>
    </reaction>
    <physiologicalReaction direction="left-to-right" evidence="1">
        <dbReference type="Rhea" id="RHEA:38996"/>
    </physiologicalReaction>
</comment>
<comment type="catalytic activity">
    <reaction evidence="1">
        <text>1-dodecanoyl-sn-glycero-3-phosphocholine + H2O = 1-dodecanoyl-sn-glycerol 3-phosphate + choline + H(+)</text>
        <dbReference type="Rhea" id="RHEA:38991"/>
        <dbReference type="ChEBI" id="CHEBI:15354"/>
        <dbReference type="ChEBI" id="CHEBI:15377"/>
        <dbReference type="ChEBI" id="CHEBI:15378"/>
        <dbReference type="ChEBI" id="CHEBI:72682"/>
        <dbReference type="ChEBI" id="CHEBI:74966"/>
    </reaction>
    <physiologicalReaction direction="left-to-right" evidence="1">
        <dbReference type="Rhea" id="RHEA:38992"/>
    </physiologicalReaction>
</comment>
<comment type="catalytic activity">
    <reaction evidence="1">
        <text>1-(9Z-octadecenoyl)-sn-glycero-3-phosphocholine + H2O = 1-(9Z-octadecenoyl)-sn-glycero-3-phosphate + choline + H(+)</text>
        <dbReference type="Rhea" id="RHEA:38915"/>
        <dbReference type="ChEBI" id="CHEBI:15354"/>
        <dbReference type="ChEBI" id="CHEBI:15377"/>
        <dbReference type="ChEBI" id="CHEBI:15378"/>
        <dbReference type="ChEBI" id="CHEBI:28610"/>
        <dbReference type="ChEBI" id="CHEBI:74544"/>
    </reaction>
    <physiologicalReaction direction="left-to-right" evidence="1">
        <dbReference type="Rhea" id="RHEA:38916"/>
    </physiologicalReaction>
</comment>
<comment type="catalytic activity">
    <reaction evidence="1">
        <text>1-tetradecanoyl-sn-glycero-3-phosphocholine + H2O = 1-tetradecanoyl-sn-glycerol 3-phosphate + choline + H(+)</text>
        <dbReference type="Rhea" id="RHEA:38983"/>
        <dbReference type="ChEBI" id="CHEBI:15354"/>
        <dbReference type="ChEBI" id="CHEBI:15377"/>
        <dbReference type="ChEBI" id="CHEBI:15378"/>
        <dbReference type="ChEBI" id="CHEBI:64489"/>
        <dbReference type="ChEBI" id="CHEBI:72683"/>
    </reaction>
    <physiologicalReaction direction="left-to-right" evidence="1">
        <dbReference type="Rhea" id="RHEA:38984"/>
    </physiologicalReaction>
</comment>
<comment type="catalytic activity">
    <reaction evidence="1">
        <text>1-decanoyl-sn-glycero-3-phosphocholine + H2O = 1-decanoyl-sn-glycero-3-phosphate + choline + H(+)</text>
        <dbReference type="Rhea" id="RHEA:41131"/>
        <dbReference type="ChEBI" id="CHEBI:15354"/>
        <dbReference type="ChEBI" id="CHEBI:15377"/>
        <dbReference type="ChEBI" id="CHEBI:15378"/>
        <dbReference type="ChEBI" id="CHEBI:77724"/>
        <dbReference type="ChEBI" id="CHEBI:77726"/>
    </reaction>
    <physiologicalReaction direction="left-to-right" evidence="1">
        <dbReference type="Rhea" id="RHEA:41132"/>
    </physiologicalReaction>
</comment>
<comment type="catalytic activity">
    <reaction evidence="1">
        <text>1-octadecanoyl-sn-glycero-3-phosphocholine + H2O = 1-octadecanoyl-sn-glycero-3-phosphate + choline + H(+)</text>
        <dbReference type="Rhea" id="RHEA:38979"/>
        <dbReference type="ChEBI" id="CHEBI:15354"/>
        <dbReference type="ChEBI" id="CHEBI:15377"/>
        <dbReference type="ChEBI" id="CHEBI:15378"/>
        <dbReference type="ChEBI" id="CHEBI:73858"/>
        <dbReference type="ChEBI" id="CHEBI:74565"/>
    </reaction>
    <physiologicalReaction direction="left-to-right" evidence="1">
        <dbReference type="Rhea" id="RHEA:38980"/>
    </physiologicalReaction>
</comment>
<comment type="catalytic activity">
    <reaction evidence="1">
        <text>1-hexadecanoyl-sn-glycero-3-phosphocholine + H2O = 1-hexadecanoyl-sn-glycero-3-phosphate + choline + H(+)</text>
        <dbReference type="Rhea" id="RHEA:38975"/>
        <dbReference type="ChEBI" id="CHEBI:15354"/>
        <dbReference type="ChEBI" id="CHEBI:15377"/>
        <dbReference type="ChEBI" id="CHEBI:15378"/>
        <dbReference type="ChEBI" id="CHEBI:57518"/>
        <dbReference type="ChEBI" id="CHEBI:72998"/>
    </reaction>
    <physiologicalReaction direction="left-to-right" evidence="1">
        <dbReference type="Rhea" id="RHEA:38976"/>
    </physiologicalReaction>
</comment>
<comment type="catalytic activity">
    <reaction evidence="1">
        <text>1-hexanoyl-sn-glycero-3-phosphocholine + H2O = 1-hexanoyl-sn-glycero-3-phosphate + choline + H(+)</text>
        <dbReference type="Rhea" id="RHEA:41400"/>
        <dbReference type="ChEBI" id="CHEBI:15354"/>
        <dbReference type="ChEBI" id="CHEBI:15377"/>
        <dbReference type="ChEBI" id="CHEBI:15378"/>
        <dbReference type="ChEBI" id="CHEBI:78215"/>
        <dbReference type="ChEBI" id="CHEBI:78223"/>
    </reaction>
    <physiologicalReaction direction="left-to-right" evidence="1">
        <dbReference type="Rhea" id="RHEA:41401"/>
    </physiologicalReaction>
</comment>
<comment type="catalytic activity">
    <reaction evidence="1">
        <text>1-(9Z,12Z)-octadecadienoyl-sn-glycero-3-phosphocholine + H2O = 1-(9Z,12Z)-octadecadienoyl-sn-glycero-3-phosphate + choline + H(+)</text>
        <dbReference type="Rhea" id="RHEA:41135"/>
        <dbReference type="ChEBI" id="CHEBI:15354"/>
        <dbReference type="ChEBI" id="CHEBI:15377"/>
        <dbReference type="ChEBI" id="CHEBI:15378"/>
        <dbReference type="ChEBI" id="CHEBI:28733"/>
        <dbReference type="ChEBI" id="CHEBI:74547"/>
    </reaction>
    <physiologicalReaction direction="left-to-right" evidence="1">
        <dbReference type="Rhea" id="RHEA:41136"/>
    </physiologicalReaction>
</comment>
<comment type="catalytic activity">
    <reaction evidence="1">
        <text>sphing-4-enine-phosphocholine + H2O = sphing-4-enine 1-phosphate + choline + H(+)</text>
        <dbReference type="Rhea" id="RHEA:38919"/>
        <dbReference type="ChEBI" id="CHEBI:15354"/>
        <dbReference type="ChEBI" id="CHEBI:15377"/>
        <dbReference type="ChEBI" id="CHEBI:15378"/>
        <dbReference type="ChEBI" id="CHEBI:58906"/>
        <dbReference type="ChEBI" id="CHEBI:60119"/>
    </reaction>
    <physiologicalReaction direction="left-to-right" evidence="1">
        <dbReference type="Rhea" id="RHEA:38920"/>
    </physiologicalReaction>
</comment>
<comment type="catalytic activity">
    <reaction evidence="1">
        <text>1-(5Z,8Z,11Z,14Z-eicosatetraenoyl)-sn-glycero-3-phosphocholine + H2O = 1-(5Z,8Z,11Z,14Z-eicosatetraenoyl)-sn-glycero-3-phosphate + choline + H(+)</text>
        <dbReference type="Rhea" id="RHEA:41139"/>
        <dbReference type="ChEBI" id="CHEBI:15354"/>
        <dbReference type="ChEBI" id="CHEBI:15377"/>
        <dbReference type="ChEBI" id="CHEBI:15378"/>
        <dbReference type="ChEBI" id="CHEBI:74344"/>
        <dbReference type="ChEBI" id="CHEBI:74938"/>
    </reaction>
    <physiologicalReaction direction="left-to-right" evidence="1">
        <dbReference type="Rhea" id="RHEA:41140"/>
    </physiologicalReaction>
</comment>
<comment type="catalytic activity">
    <reaction evidence="1">
        <text>a 2-acyl-sn-glycero-3-phosphocholine + H2O = a 2-acyl-sn-glycerol 3-phosphate + choline + H(+)</text>
        <dbReference type="Rhea" id="RHEA:41712"/>
        <dbReference type="ChEBI" id="CHEBI:15354"/>
        <dbReference type="ChEBI" id="CHEBI:15377"/>
        <dbReference type="ChEBI" id="CHEBI:15378"/>
        <dbReference type="ChEBI" id="CHEBI:57875"/>
        <dbReference type="ChEBI" id="CHEBI:64982"/>
    </reaction>
    <physiologicalReaction direction="left-to-right" evidence="1">
        <dbReference type="Rhea" id="RHEA:41713"/>
    </physiologicalReaction>
</comment>
<comment type="catalytic activity">
    <reaction evidence="1">
        <text>a 1,2-diacyl-sn-glycero-3-phosphocholine + H2O = a 1,2-diacyl-sn-glycero-3-phosphate + choline + H(+)</text>
        <dbReference type="Rhea" id="RHEA:14445"/>
        <dbReference type="ChEBI" id="CHEBI:15354"/>
        <dbReference type="ChEBI" id="CHEBI:15377"/>
        <dbReference type="ChEBI" id="CHEBI:15378"/>
        <dbReference type="ChEBI" id="CHEBI:57643"/>
        <dbReference type="ChEBI" id="CHEBI:58608"/>
        <dbReference type="EC" id="3.1.4.4"/>
    </reaction>
    <physiologicalReaction direction="left-to-right" evidence="1">
        <dbReference type="Rhea" id="RHEA:14446"/>
    </physiologicalReaction>
</comment>
<comment type="catalytic activity">
    <reaction evidence="1">
        <text>1,2-dioctanoyl-sn-glycero-3-phosphocholine + H2O = 1,2-dioctanoyl-sn-glycero-3-phosphate + choline + H(+)</text>
        <dbReference type="Rhea" id="RHEA:41416"/>
        <dbReference type="ChEBI" id="CHEBI:15354"/>
        <dbReference type="ChEBI" id="CHEBI:15377"/>
        <dbReference type="ChEBI" id="CHEBI:15378"/>
        <dbReference type="ChEBI" id="CHEBI:78228"/>
        <dbReference type="ChEBI" id="CHEBI:78229"/>
    </reaction>
    <physiologicalReaction direction="left-to-right" evidence="1">
        <dbReference type="Rhea" id="RHEA:41417"/>
    </physiologicalReaction>
</comment>
<comment type="catalytic activity">
    <reaction evidence="1">
        <text>1,2-didecanoyl-sn-glycero-3-phosphocholine + H2O = 1,2-didecanoyl-sn-glycero-3-phosphate + choline + H(+)</text>
        <dbReference type="Rhea" id="RHEA:41412"/>
        <dbReference type="ChEBI" id="CHEBI:15354"/>
        <dbReference type="ChEBI" id="CHEBI:15377"/>
        <dbReference type="ChEBI" id="CHEBI:15378"/>
        <dbReference type="ChEBI" id="CHEBI:78226"/>
        <dbReference type="ChEBI" id="CHEBI:78227"/>
    </reaction>
    <physiologicalReaction direction="left-to-right" evidence="1">
        <dbReference type="Rhea" id="RHEA:41413"/>
    </physiologicalReaction>
</comment>
<comment type="catalytic activity">
    <reaction evidence="2">
        <text>a 1-acyl-sn-glycero-3-phospho-L-serine + H2O = a 1-acyl-sn-glycero-3-phosphate + L-serine + H(+)</text>
        <dbReference type="Rhea" id="RHEA:38999"/>
        <dbReference type="ChEBI" id="CHEBI:15377"/>
        <dbReference type="ChEBI" id="CHEBI:15378"/>
        <dbReference type="ChEBI" id="CHEBI:33384"/>
        <dbReference type="ChEBI" id="CHEBI:57970"/>
        <dbReference type="ChEBI" id="CHEBI:64379"/>
    </reaction>
    <physiologicalReaction direction="left-to-right" evidence="2">
        <dbReference type="Rhea" id="RHEA:39000"/>
    </physiologicalReaction>
</comment>
<comment type="catalytic activity">
    <reaction evidence="2">
        <text>1-(9Z-octadecenoyl)-sn-glycero-3-phospho-L-serine + H2O = 1-(9Z-octadecenoyl)-sn-glycero-3-phosphate + L-serine + H(+)</text>
        <dbReference type="Rhea" id="RHEA:38931"/>
        <dbReference type="ChEBI" id="CHEBI:15377"/>
        <dbReference type="ChEBI" id="CHEBI:15378"/>
        <dbReference type="ChEBI" id="CHEBI:33384"/>
        <dbReference type="ChEBI" id="CHEBI:74544"/>
        <dbReference type="ChEBI" id="CHEBI:74617"/>
    </reaction>
    <physiologicalReaction direction="left-to-right" evidence="2">
        <dbReference type="Rhea" id="RHEA:38932"/>
    </physiologicalReaction>
</comment>
<comment type="catalytic activity">
    <reaction evidence="1">
        <text>a 2-acyl-sn-glycero-3-phospho-L-serine + H2O = a 2-acyl-sn-glycerol 3-phosphate + L-serine + H(+)</text>
        <dbReference type="Rhea" id="RHEA:41716"/>
        <dbReference type="ChEBI" id="CHEBI:15377"/>
        <dbReference type="ChEBI" id="CHEBI:15378"/>
        <dbReference type="ChEBI" id="CHEBI:33384"/>
        <dbReference type="ChEBI" id="CHEBI:64982"/>
        <dbReference type="ChEBI" id="CHEBI:65214"/>
    </reaction>
    <physiologicalReaction direction="left-to-right" evidence="1">
        <dbReference type="Rhea" id="RHEA:41717"/>
    </physiologicalReaction>
</comment>
<comment type="cofactor">
    <cofactor evidence="9 10 11">
        <name>Zn(2+)</name>
        <dbReference type="ChEBI" id="CHEBI:29105"/>
    </cofactor>
    <text evidence="9 10 11">Binds 2 Zn(2+) ions per subunit.</text>
</comment>
<comment type="cofactor">
    <cofactor evidence="9 10 11">
        <name>Ca(2+)</name>
        <dbReference type="ChEBI" id="CHEBI:29108"/>
    </cofactor>
    <text evidence="9 10 11">Binds 1 Ca(2+) ion per subunit.</text>
</comment>
<comment type="activity regulation">
    <text evidence="7">Inhibited by EDTA and EGTA.</text>
</comment>
<comment type="biophysicochemical properties">
    <kinetics>
        <KM evidence="7">12.9 mM for pNppp (isoform 1)</KM>
        <KM evidence="7">4.4 mM for pNppp (isoform 2)</KM>
        <KM evidence="7">11.8 mM for pNppp (isoform 3)</KM>
        <Vmax evidence="7">1.9 nmol/min/ug enzyme with pNppp as substrate (isoform 1)</Vmax>
        <Vmax evidence="7">0.35 nmol/min/ug enzyme with pNppp as substrate (isoform 2)</Vmax>
        <Vmax evidence="7">1.8 nmol/min/ug enzyme with pNppp as substrate (isoform 3)</Vmax>
    </kinetics>
    <phDependence>
        <text evidence="7">Optimum pH is 8.0 for isoforms 1, 2 and 3.</text>
    </phDependence>
    <temperatureDependence>
        <text evidence="7">Isoforms 1 and 3 have maximum activity from 45 to 55 degrees Celsius.</text>
    </temperatureDependence>
</comment>
<comment type="subcellular location">
    <subcellularLocation>
        <location evidence="6 8 9">Secreted</location>
    </subcellularLocation>
</comment>
<comment type="alternative products">
    <event type="alternative splicing"/>
    <isoform>
        <id>Q9R1E6-1</id>
        <name>1</name>
        <name>Beta</name>
        <sequence type="displayed"/>
    </isoform>
    <isoform>
        <id>Q9R1E6-2</id>
        <name>2</name>
        <name>Alpha</name>
        <sequence type="described" ref="VSP_036396"/>
    </isoform>
    <isoform>
        <id>Q9R1E6-3</id>
        <name>3</name>
        <name>Gamma</name>
        <sequence type="described" ref="VSP_036397"/>
    </isoform>
</comment>
<comment type="tissue specificity">
    <text evidence="7">Expressed in brain and adipose tissue.</text>
</comment>
<comment type="induction">
    <text evidence="5">Up-regulated in adipocytes of obese-diabetic db/db mice.</text>
</comment>
<comment type="domain">
    <text evidence="17">The nuclease-like domain is most probably catalytically inactive as residues that are essential for catalysis in the DNA/RNA non-specific endonucleases are not conserved. However, it is required for the stability of the protein and the catalytic activity born by the Phosphodiesterase domain.</text>
</comment>
<comment type="PTM">
    <text evidence="6 9 10">N-glycosylation, but not furin-cleavage, plays a critical role on secretion and on lysoPLD activity. Secretion requires simultaneous glycosylation on Asn-53 and Asn-410, while probable glycosylation of Asn-410 has a preferential role on lysoPLD activity. Not O-glycosylated.</text>
</comment>
<comment type="PTM">
    <text evidence="8">The interdomain disulfide bond between Cys-413 and Cys-805 is essential for catalytic activity.</text>
</comment>
<comment type="disease">
    <text evidence="5">May contribute to obesity (PubMed:15700135).</text>
</comment>
<comment type="similarity">
    <text evidence="16">Belongs to the nucleotide pyrophosphatase/phosphodiesterase family.</text>
</comment>
<keyword id="KW-0002">3D-structure</keyword>
<keyword id="KW-0025">Alternative splicing</keyword>
<keyword id="KW-0106">Calcium</keyword>
<keyword id="KW-0145">Chemotaxis</keyword>
<keyword id="KW-0165">Cleavage on pair of basic residues</keyword>
<keyword id="KW-1015">Disulfide bond</keyword>
<keyword id="KW-0325">Glycoprotein</keyword>
<keyword id="KW-0378">Hydrolase</keyword>
<keyword id="KW-0442">Lipid degradation</keyword>
<keyword id="KW-0443">Lipid metabolism</keyword>
<keyword id="KW-0479">Metal-binding</keyword>
<keyword id="KW-0550">Obesity</keyword>
<keyword id="KW-1185">Reference proteome</keyword>
<keyword id="KW-0677">Repeat</keyword>
<keyword id="KW-0964">Secreted</keyword>
<keyword id="KW-0732">Signal</keyword>
<keyword id="KW-0862">Zinc</keyword>
<organism>
    <name type="scientific">Mus musculus</name>
    <name type="common">Mouse</name>
    <dbReference type="NCBI Taxonomy" id="10090"/>
    <lineage>
        <taxon>Eukaryota</taxon>
        <taxon>Metazoa</taxon>
        <taxon>Chordata</taxon>
        <taxon>Craniata</taxon>
        <taxon>Vertebrata</taxon>
        <taxon>Euteleostomi</taxon>
        <taxon>Mammalia</taxon>
        <taxon>Eutheria</taxon>
        <taxon>Euarchontoglires</taxon>
        <taxon>Glires</taxon>
        <taxon>Rodentia</taxon>
        <taxon>Myomorpha</taxon>
        <taxon>Muroidea</taxon>
        <taxon>Muridae</taxon>
        <taxon>Murinae</taxon>
        <taxon>Mus</taxon>
        <taxon>Mus</taxon>
    </lineage>
</organism>
<accession>Q9R1E6</accession>
<accession>A8UH85</accession>
<accession>A8UH93</accession>
<accession>B2ZP54</accession>
<accession>Q6PDE0</accession>
<accession>Q99LG9</accession>
<gene>
    <name evidence="20" type="primary">Enpp2</name>
    <name type="synonym">Npps2</name>
    <name evidence="14" type="synonym">Pdnp2</name>
</gene>